<feature type="signal peptide">
    <location>
        <begin position="1"/>
        <end position="21"/>
    </location>
</feature>
<feature type="chain" id="PRO_0000014518" description="Basigin">
    <location>
        <begin position="22"/>
        <end position="385"/>
    </location>
</feature>
<feature type="topological domain" description="Extracellular" evidence="3">
    <location>
        <begin position="138"/>
        <end position="323"/>
    </location>
</feature>
<feature type="transmembrane region" description="Helical" evidence="4">
    <location>
        <begin position="324"/>
        <end position="344"/>
    </location>
</feature>
<feature type="topological domain" description="Cytoplasmic" evidence="3">
    <location>
        <begin position="345"/>
        <end position="385"/>
    </location>
</feature>
<feature type="domain" description="Ig-like" evidence="5">
    <location>
        <begin position="37"/>
        <end position="120"/>
    </location>
</feature>
<feature type="domain" description="Ig-like C2-type" evidence="5">
    <location>
        <begin position="138"/>
        <end position="219"/>
    </location>
</feature>
<feature type="domain" description="Ig-like V-type" evidence="5">
    <location>
        <begin position="221"/>
        <end position="315"/>
    </location>
</feature>
<feature type="region of interest" description="Disordered" evidence="6">
    <location>
        <begin position="353"/>
        <end position="385"/>
    </location>
</feature>
<feature type="modified residue" description="Phosphoserine" evidence="63 64 65 66 67">
    <location>
        <position position="362"/>
    </location>
</feature>
<feature type="modified residue" description="Phosphoserine" evidence="67">
    <location>
        <position position="368"/>
    </location>
</feature>
<feature type="glycosylation site" description="N-linked (GlcNAc...) asparagine" evidence="12 20 21">
    <location>
        <position position="160"/>
    </location>
</feature>
<feature type="glycosylation site" description="N-linked (GlcNAc...) asparagine" evidence="12 20 21">
    <location>
        <position position="268"/>
    </location>
</feature>
<feature type="glycosylation site" description="N-linked (GlcNAc...) asparagine" evidence="4">
    <location>
        <position position="302"/>
    </location>
</feature>
<feature type="disulfide bond" evidence="27 54 55">
    <location>
        <begin position="44"/>
        <end position="108"/>
    </location>
</feature>
<feature type="disulfide bond" evidence="19 22 31 42 52 53 56 57">
    <location>
        <begin position="157"/>
        <end position="203"/>
    </location>
</feature>
<feature type="disulfide bond" evidence="19 31 52 56">
    <location>
        <begin position="242"/>
        <end position="301"/>
    </location>
</feature>
<feature type="splice variant" id="VSP_043225" description="In isoform 3." evidence="46">
    <location>
        <begin position="1"/>
        <end position="209"/>
    </location>
</feature>
<feature type="splice variant" id="VSP_043226" description="In isoform 4." evidence="46">
    <original>MAAALFVLLGF</original>
    <variation>MKQSDASPQER</variation>
    <location>
        <begin position="1"/>
        <end position="11"/>
    </location>
</feature>
<feature type="splice variant" id="VSP_043227" description="In isoform 4." evidence="46">
    <location>
        <begin position="12"/>
        <end position="191"/>
    </location>
</feature>
<feature type="splice variant" id="VSP_011501" description="In isoform 2." evidence="43 45 49">
    <location>
        <begin position="24"/>
        <end position="139"/>
    </location>
</feature>
<feature type="sequence variant" id="VAR_084546" description="In dbSNP:rs201850688." evidence="39">
    <original>L</original>
    <variation>V</variation>
    <location>
        <position position="13"/>
    </location>
</feature>
<feature type="sequence variant" id="VAR_084547" description="In dbSNP:rs11551906." evidence="39">
    <original>T</original>
    <variation>A</variation>
    <location>
        <position position="16"/>
    </location>
</feature>
<feature type="sequence variant" id="VAR_084548" description="In dbSNP:rs144824657." evidence="39">
    <original>V</original>
    <variation>F</variation>
    <location>
        <position position="26"/>
    </location>
</feature>
<feature type="sequence variant" id="VAR_082637" description="No effect on the interaction with P.falciparum RH5; dbSNP:rs14704." evidence="29">
    <original>K</original>
    <variation>N</variation>
    <location>
        <position position="152"/>
    </location>
</feature>
<feature type="sequence variant" id="VAR_082638" description="No effect on the interaction with P.falciparum RH5; dbSNP:rs2229662." evidence="29">
    <original>V</original>
    <variation>L</variation>
    <location>
        <position position="176"/>
    </location>
</feature>
<feature type="sequence variant" id="VAR_082639" description="Loss of interaction with P.falciparum RH5; dbSNP:rs55911144." evidence="29">
    <original>L</original>
    <variation>P</variation>
    <location>
        <position position="206"/>
    </location>
</feature>
<feature type="sequence variant" id="VAR_013574" description="In Ok(A-); 2-fold reduction in the binding affinity for P.falciparum RH5 with reduced erythrocyte invasion by P.falciparum isolates 3D7 and Dd2; dbSNP:rs104894669." evidence="29 41">
    <original>E</original>
    <variation>K</variation>
    <location>
        <position position="208"/>
    </location>
</feature>
<feature type="sequence variant" id="VAR_011720" description="Loss of interaction with P.falciparum RH5; dbSNP:rs1803203." evidence="29">
    <original>G</original>
    <variation>V</variation>
    <location>
        <position position="269"/>
    </location>
</feature>
<feature type="mutagenesis site" description="Loss of ability to stimulate interleukin-6 secretion." evidence="27">
    <original>C</original>
    <variation>M</variation>
    <location>
        <position position="67"/>
    </location>
</feature>
<feature type="mutagenesis site" description="No effect on the interaction with P.falciparum RH5; when associated with D-268 and D-302." evidence="29">
    <original>N</original>
    <variation>D</variation>
    <location>
        <position position="160"/>
    </location>
</feature>
<feature type="mutagenesis site" description="No effect on the interaction with P.falciparum RH5; when associated with D-160 and D-302." evidence="29">
    <original>N</original>
    <variation>D</variation>
    <location>
        <position position="268"/>
    </location>
</feature>
<feature type="mutagenesis site" description="No effect on the interaction with P.falciparum RH5; when associated with D-160 and D-268." evidence="29">
    <original>N</original>
    <variation>D</variation>
    <location>
        <position position="302"/>
    </location>
</feature>
<feature type="sequence conflict" description="In Ref. 2; BAC76828." evidence="50" ref="2">
    <original>F</original>
    <variation>L</variation>
    <location>
        <position position="328"/>
    </location>
</feature>
<feature type="strand" evidence="70">
    <location>
        <begin position="24"/>
        <end position="27"/>
    </location>
</feature>
<feature type="strand" evidence="70">
    <location>
        <begin position="32"/>
        <end position="35"/>
    </location>
</feature>
<feature type="strand" evidence="70">
    <location>
        <begin position="40"/>
        <end position="47"/>
    </location>
</feature>
<feature type="strand" evidence="70">
    <location>
        <begin position="53"/>
        <end position="62"/>
    </location>
</feature>
<feature type="helix" evidence="70">
    <location>
        <begin position="74"/>
        <end position="77"/>
    </location>
</feature>
<feature type="strand" evidence="70">
    <location>
        <begin position="79"/>
        <end position="95"/>
    </location>
</feature>
<feature type="helix" evidence="70">
    <location>
        <begin position="100"/>
        <end position="102"/>
    </location>
</feature>
<feature type="strand" evidence="70">
    <location>
        <begin position="104"/>
        <end position="111"/>
    </location>
</feature>
<feature type="strand" evidence="70">
    <location>
        <begin position="116"/>
        <end position="118"/>
    </location>
</feature>
<feature type="strand" evidence="70">
    <location>
        <begin position="128"/>
        <end position="137"/>
    </location>
</feature>
<feature type="strand" evidence="69">
    <location>
        <begin position="142"/>
        <end position="149"/>
    </location>
</feature>
<feature type="strand" evidence="69">
    <location>
        <begin position="152"/>
        <end position="159"/>
    </location>
</feature>
<feature type="strand" evidence="69">
    <location>
        <begin position="166"/>
        <end position="173"/>
    </location>
</feature>
<feature type="strand" evidence="69">
    <location>
        <begin position="176"/>
        <end position="181"/>
    </location>
</feature>
<feature type="strand" evidence="69">
    <location>
        <begin position="186"/>
        <end position="192"/>
    </location>
</feature>
<feature type="helix" evidence="69">
    <location>
        <begin position="194"/>
        <end position="196"/>
    </location>
</feature>
<feature type="strand" evidence="69">
    <location>
        <begin position="199"/>
        <end position="207"/>
    </location>
</feature>
<feature type="strand" evidence="69">
    <location>
        <begin position="210"/>
        <end position="217"/>
    </location>
</feature>
<feature type="strand" evidence="73">
    <location>
        <begin position="224"/>
        <end position="226"/>
    </location>
</feature>
<feature type="strand" evidence="73">
    <location>
        <begin position="228"/>
        <end position="232"/>
    </location>
</feature>
<feature type="strand" evidence="72">
    <location>
        <begin position="234"/>
        <end position="236"/>
    </location>
</feature>
<feature type="strand" evidence="73">
    <location>
        <begin position="238"/>
        <end position="243"/>
    </location>
</feature>
<feature type="strand" evidence="73">
    <location>
        <begin position="250"/>
        <end position="258"/>
    </location>
</feature>
<feature type="strand" evidence="68">
    <location>
        <begin position="260"/>
        <end position="262"/>
    </location>
</feature>
<feature type="strand" evidence="73">
    <location>
        <begin position="263"/>
        <end position="265"/>
    </location>
</feature>
<feature type="helix" evidence="73">
    <location>
        <begin position="270"/>
        <end position="272"/>
    </location>
</feature>
<feature type="strand" evidence="73">
    <location>
        <begin position="274"/>
        <end position="278"/>
    </location>
</feature>
<feature type="strand" evidence="73">
    <location>
        <begin position="280"/>
        <end position="287"/>
    </location>
</feature>
<feature type="turn" evidence="73">
    <location>
        <begin position="292"/>
        <end position="294"/>
    </location>
</feature>
<feature type="strand" evidence="73">
    <location>
        <begin position="297"/>
        <end position="305"/>
    </location>
</feature>
<feature type="strand" evidence="73">
    <location>
        <begin position="308"/>
        <end position="318"/>
    </location>
</feature>
<feature type="turn" evidence="71">
    <location>
        <begin position="323"/>
        <end position="325"/>
    </location>
</feature>
<feature type="helix" evidence="71">
    <location>
        <begin position="326"/>
        <end position="353"/>
    </location>
</feature>
<feature type="region of interest" description="Essential for interaction with KDR/VEGFR2" evidence="32">
    <location sequence="P35613-2">
        <begin position="195"/>
        <end position="199"/>
    </location>
</feature>
<feature type="mutagenesis site" description="Severe reduction in the interaction with P.falciparum RH5." evidence="30">
    <original>F</original>
    <variation>L</variation>
    <location sequence="P35613-2">
        <position position="27"/>
    </location>
</feature>
<feature type="mutagenesis site" description="No effect on the interaction with P.falciparum RH5." evidence="30">
    <original>D</original>
    <variation>E</variation>
    <location sequence="P35613-2">
        <position position="32"/>
    </location>
</feature>
<feature type="mutagenesis site" description="No effect on the interaction with P.falciparum RH5." evidence="30">
    <original>K</original>
    <variation>E</variation>
    <location sequence="P35613-2">
        <position position="75"/>
    </location>
</feature>
<feature type="mutagenesis site" description="Severe reduction in the interaction with P.falciparum RH5." evidence="30">
    <original>Q</original>
    <variation>K</variation>
    <location sequence="P35613-2">
        <position position="100"/>
    </location>
</feature>
<feature type="mutagenesis site" description="Severe reduction in the interaction with P.falciparum RH5." evidence="30">
    <original>H</original>
    <variation>HH</variation>
    <location sequence="P35613-2">
        <position position="102"/>
    </location>
</feature>
<feature type="mutagenesis site" description="Reduced interaction with KDR/VEGFR2." evidence="32">
    <original>D</original>
    <variation>A</variation>
    <location sequence="P35613-2">
        <position position="144"/>
    </location>
</feature>
<feature type="mutagenesis site" description="Loss of its ability to mediate chemotactic activity of PPIA/CYPA." evidence="9">
    <original>PG</original>
    <variation>AA</variation>
    <location sequence="P35613-2">
        <begin position="180"/>
        <end position="181"/>
    </location>
</feature>
<feature type="mutagenesis site" description="Reduced interaction with KDR/VEGFR2. Significant loss of interaction with KDR/VEGFR2; when associated with A-184." evidence="32">
    <original>Q</original>
    <variation>A</variation>
    <location sequence="P35613-2">
        <position position="182"/>
    </location>
</feature>
<feature type="mutagenesis site" description="Reduced interaction with KDR/VEGFR2. Significant loss of interaction with KDR/VEGFR2; when associated with A-182." evidence="32">
    <original>R</original>
    <variation>A</variation>
    <location sequence="P35613-2">
        <position position="184"/>
    </location>
</feature>
<feature type="mutagenesis site" description="Reduced interaction with KDR/VEGFR2. Complete loss of interaction with KDR/VEGFR2 when associated with A-199." evidence="32">
    <original>Q</original>
    <variation>A</variation>
    <location sequence="P35613-2">
        <position position="195"/>
    </location>
</feature>
<feature type="mutagenesis site" description="Reduced interaction with KDR/VEGFR2. Complete loss of interaction with KDR/VEGFR2; when associated with A-195." evidence="32">
    <original>T</original>
    <variation>A</variation>
    <location sequence="P35613-2">
        <position position="199"/>
    </location>
</feature>
<feature type="mutagenesis site" description="Loss of interaction with PPIL2." evidence="15">
    <original>P</original>
    <variation>A</variation>
    <location sequence="P35613-2">
        <position position="211"/>
    </location>
</feature>
<proteinExistence type="evidence at protein level"/>
<comment type="function">
    <molecule>Isoform 1</molecule>
    <text evidence="2 27 33">Essential for normal retinal maturation and development (By similarity). Acts as a retinal cell surface receptor for NXNL1 and plays an important role in NXNL1-mediated survival of retinal cone photoreceptors (PubMed:25957687). In association with glucose transporter SLC16A1/GLUT1 and NXNL1, promotes retinal cone survival by enhancing aerobic glycolysis and accelerating the entry of glucose into photoreceptors (PubMed:25957687). May act as a potent stimulator of IL6 secretion in multiple cell lines that include monocytes (PubMed:21620857).</text>
</comment>
<comment type="function">
    <molecule>Isoform 1</molecule>
    <text evidence="29">(Microbial infection) Erythrocyte receptor for P.falciparum RH5 which is essential for erythrocyte invasion by the merozoite stage of P.falciparum isolates 3D7 and Dd2.</text>
</comment>
<comment type="function">
    <molecule>Isoform 2</molecule>
    <text evidence="8 9 10 11 14 17 23 28 32 37">Signaling receptor for cyclophilins, essential for PPIA/CYPA and PPIB/CYPB-dependent signaling related to chemotaxis and adhesion of immune cells (PubMed:11688976, PubMed:11943775). Plays an important role in targeting monocarboxylate transporters SLC16A1/GLUT1, SLC16A11 and SLC16A12 to the plasma membrane (PubMed:17127621, PubMed:21778275, PubMed:28666119). Acts as a coreceptor for vascular endothelial growth factor receptor 2 (KDR/VEGFR2) in endothelial cells enhancing its VEGFA-mediated activation and downstream signaling (PubMed:25825981). Promotes angiogenesis through EPAS1/HIF2A-mediated up-regulation of VEGFA (isoform VEGF-165 and VEGF-121) and KDR/VEGFR2 in endothelial cells (PubMed:19837976). Plays a key role in regulating tumor growth, invasion, metastasis and neoangiogenesis by stimulating the production and release of extracellular matrix metalloproteinases and KDR/VEGFR2 by both tumor cells and stromal cells (fibroblasts and endothelial cells) (PubMed:11992541, PubMed:12553375, PubMed:15833850).</text>
</comment>
<comment type="function">
    <molecule>Isoform 2</molecule>
    <text evidence="29 34 36">(Microbial infection) Erythrocyte receptor for P.falciparum RH5 which is essential for erythrocyte invasion by the merozoite stage of P.falciparum isolates 3D7, Dd2, 7G8 and HB3 (PubMed:22080952, PubMed:26195724). Binding of P.falciparum RH5 results in BSG dimerization which triggers an increase in intracellular Ca(2+) in the erythrocyte (PubMed:28409866). This essential step leads to a rearrangement of the erythrocyte cytoskeleton required for the merozoite invasion (PubMed:28409866).</text>
</comment>
<comment type="function">
    <molecule>Isoform 2</molecule>
    <text evidence="13">(Microbial infection) Can facilitate human SARS coronavirus (SARS-CoV-1) infection via its interaction with virus-associated PPIA/CYPA.</text>
</comment>
<comment type="function">
    <molecule>Isoform 2</molecule>
    <text evidence="7">(Microbial infection) Can facilitate HIV-1 infection via its interaction with virus-associated PPIA/CYPA.</text>
</comment>
<comment type="function">
    <molecule>Isoform 2</molecule>
    <text evidence="40 48">(Microbial infection) First described as a receptor for severe acute respiratory syndrome coronavirus 2 (SARS-CoV-2), it is not required for SARS-CoV-2 infection.</text>
</comment>
<comment type="function">
    <molecule>Isoform 2</molecule>
    <text evidence="24">(Microbial infection) Acts as a receptor for measles virus.</text>
</comment>
<comment type="function">
    <molecule>Isoform 2</molecule>
    <text evidence="38">(Microbial infection) Promotes entry of pentamer-expressing human cytomegalovirus (HCMV) into epithelial and endothelial cells.</text>
</comment>
<comment type="subunit">
    <molecule>Isoform 1</molecule>
    <text evidence="1 22 33 35">Homooligomer (PubMed:19768682). Interacts with NXNL1 (PubMed:25957687). Interacts with SLC2A1 and SLC16A1/GLUT1 (By similarity). Interacts with XKR8; promoting its localization at the cell membrane (PubMed:27503893).</text>
</comment>
<comment type="subunit">
    <molecule>Isoform 1</molecule>
    <text evidence="29">(Microbial infection) Interacts with P.falciparum (isolate 3D7) RH5/PfRH5; the interaction is required for the invasion of the host erythrocytes by the parasite at the merozoite stage.</text>
</comment>
<comment type="subunit">
    <molecule>Isoform 2</molecule>
    <text evidence="2 3 7 9 13 15 17 18 19 25 26 28 32 37">Homooligomer (PubMed:18430721). Forms heterooligomers with isoform 3 (PubMed:21536654). Interacts with VEGFA and KDR/VEGFR2 (PubMed:25825981). Interacts with PPIA/CYPA (PubMed:11353871, PubMed:11943775, PubMed:15688292, PubMed:21245143). Interacts with PPIL2; regulates BSG transport to the cell membrane (PubMed:15946952). Interacts with SLC16A1; interaction mediates SLC16A3 targeting to the plasma membrane (PubMed:17127621). Interacts with SLC16A12 (PubMed:21778275). Interacts with SLC16A11 (PubMed:28666119). Interacts with AJAP1 (PubMed:17267690). Interacts with SLC1A3, ATP1B2, MAG and L1CAM (By similarity). Interacts with SLC16A3; interaction mediates SLC16A3 targeting to the plasma membrane.</text>
</comment>
<comment type="subunit">
    <molecule>Isoform 2</molecule>
    <text evidence="29 30 31 34">(Microbial infection) Interacts with P.falciparum (isolates 3D7 or 7G8) RH5/PfRH5; the interaction is required for the invasion of the host erythrocytes by the parasite at the merozoite stage.</text>
</comment>
<comment type="subunit">
    <molecule>Isoform 2</molecule>
    <text evidence="40 48">(Microbial infection) Does not interact with severe acute respiratory syndrome coronavirus 2 (SARS-CoV-2) spike glycoprotein, even if previous works were based on a putative interaction.</text>
</comment>
<comment type="subunit">
    <molecule>Isoform 3</molecule>
    <text evidence="26">Forms heterooligomers with isoform 2.</text>
</comment>
<comment type="subunit">
    <text evidence="3">Interacts with SLC16A6; this interaction mediates targeting to the plasma membrane.</text>
</comment>
<comment type="interaction">
    <interactant intactId="EBI-750709">
        <id>P35613</id>
    </interactant>
    <interactant intactId="EBI-77613">
        <id>P05067</id>
        <label>APP</label>
    </interactant>
    <organismsDiffer>false</organismsDiffer>
    <experiments>2</experiments>
</comment>
<comment type="interaction">
    <interactant intactId="EBI-750709">
        <id>P35613</id>
    </interactant>
    <interactant intactId="EBI-746704">
        <id>Q9UJC3</id>
        <label>HOOK1</label>
    </interactant>
    <organismsDiffer>false</organismsDiffer>
    <experiments>3</experiments>
</comment>
<comment type="interaction">
    <interactant intactId="EBI-750709">
        <id>P35613</id>
    </interactant>
    <interactant intactId="EBI-748752">
        <id>Q9UI26</id>
        <label>IPO11</label>
    </interactant>
    <organismsDiffer>false</organismsDiffer>
    <experiments>3</experiments>
</comment>
<comment type="interaction">
    <interactant intactId="EBI-750709">
        <id>P35613</id>
    </interactant>
    <interactant intactId="EBI-998440">
        <id>Q92542</id>
        <label>NCSTN</label>
    </interactant>
    <organismsDiffer>false</organismsDiffer>
    <experiments>6</experiments>
</comment>
<comment type="interaction">
    <interactant intactId="EBI-750709">
        <id>P35613</id>
    </interactant>
    <interactant intactId="EBI-437708">
        <id>P62937</id>
        <label>PPIA</label>
    </interactant>
    <organismsDiffer>false</organismsDiffer>
    <experiments>2</experiments>
</comment>
<comment type="interaction">
    <interactant intactId="EBI-750709">
        <id>P35613</id>
    </interactant>
    <interactant intactId="EBI-2606356">
        <id>PRO_0000025592</id>
        <label>PSEN1</label>
        <dbReference type="UniProtKB" id="P49768"/>
    </interactant>
    <organismsDiffer>false</organismsDiffer>
    <experiments>6</experiments>
</comment>
<comment type="interaction">
    <interactant intactId="EBI-750709">
        <id>P35613</id>
    </interactant>
    <interactant intactId="EBI-21840241">
        <id>Q8NCK7</id>
        <label>SLC16A11</label>
    </interactant>
    <organismsDiffer>false</organismsDiffer>
    <experiments>5</experiments>
</comment>
<comment type="interaction">
    <interactant intactId="EBI-750709">
        <id>P35613</id>
    </interactant>
    <interactant intactId="EBI-1051992">
        <id>Q92797</id>
        <label>SYMPK</label>
    </interactant>
    <organismsDiffer>false</organismsDiffer>
    <experiments>2</experiments>
</comment>
<comment type="interaction">
    <interactant intactId="EBI-750709">
        <id>P35613</id>
    </interactant>
    <interactant intactId="EBI-25474821">
        <id>P0DTC2</id>
        <label>S</label>
    </interactant>
    <organismsDiffer>true</organismsDiffer>
    <experiments>7</experiments>
</comment>
<comment type="interaction">
    <interactant intactId="EBI-11037868">
        <id>P35613-2</id>
    </interactant>
    <interactant intactId="EBI-13059134">
        <id>Q13520</id>
        <label>AQP6</label>
    </interactant>
    <organismsDiffer>false</organismsDiffer>
    <experiments>3</experiments>
</comment>
<comment type="interaction">
    <interactant intactId="EBI-11037868">
        <id>P35613-2</id>
    </interactant>
    <interactant intactId="EBI-12243266">
        <id>Q7RTY0</id>
        <label>SLC16A13</label>
    </interactant>
    <organismsDiffer>false</organismsDiffer>
    <experiments>3</experiments>
</comment>
<comment type="interaction">
    <interactant intactId="EBI-11037868">
        <id>P35613-2</id>
    </interactant>
    <interactant intactId="EBI-22304327">
        <id>Q8IFM5</id>
        <label>RH5</label>
    </interactant>
    <organismsDiffer>true</organismsDiffer>
    <experiments>3</experiments>
</comment>
<comment type="interaction">
    <interactant intactId="EBI-11037868">
        <id>P35613-2</id>
    </interactant>
    <interactant intactId="EBI-16118096">
        <id>B2L3N7</id>
    </interactant>
    <organismsDiffer>true</organismsDiffer>
    <experiments>5</experiments>
</comment>
<comment type="subcellular location">
    <subcellularLocation>
        <location evidence="16">Melanosome</location>
    </subcellularLocation>
    <text evidence="16">Identified by mass spectrometry in melanosome fractions from stage I to stage IV.</text>
</comment>
<comment type="subcellular location">
    <molecule>Isoform 1</molecule>
    <subcellularLocation>
        <location evidence="33">Cell membrane</location>
        <topology evidence="3">Single-pass type I membrane protein</topology>
    </subcellularLocation>
    <subcellularLocation>
        <location evidence="2">Photoreceptor inner segment</location>
    </subcellularLocation>
    <subcellularLocation>
        <location evidence="2">Cell projection</location>
        <location evidence="2">Cilium</location>
        <location evidence="2">Photoreceptor outer segment</location>
    </subcellularLocation>
</comment>
<comment type="subcellular location">
    <molecule>Isoform 2</molecule>
    <subcellularLocation>
        <location evidence="10 13 15 17 26 32 34 36 38">Cell membrane</location>
        <topology evidence="3">Single-pass type I membrane protein</topology>
    </subcellularLocation>
    <subcellularLocation>
        <location evidence="38">Endosome</location>
    </subcellularLocation>
    <subcellularLocation>
        <location evidence="13">Endoplasmic reticulum membrane</location>
        <topology evidence="3">Single-pass type I membrane protein</topology>
    </subcellularLocation>
    <subcellularLocation>
        <location evidence="18">Basolateral cell membrane</location>
        <topology evidence="3">Single-pass type I membrane protein</topology>
    </subcellularLocation>
</comment>
<comment type="subcellular location">
    <molecule>Isoform 3</molecule>
    <subcellularLocation>
        <location evidence="26">Cell membrane</location>
        <topology evidence="3">Single-pass type I membrane protein</topology>
    </subcellularLocation>
</comment>
<comment type="subcellular location">
    <molecule>Isoform 4</molecule>
    <subcellularLocation>
        <location evidence="26">Cell membrane</location>
        <topology evidence="3">Single-pass type I membrane protein</topology>
    </subcellularLocation>
</comment>
<comment type="alternative products">
    <event type="alternative promoter"/>
    <event type="alternative splicing"/>
    <isoform>
        <id>P35613-1</id>
        <name>1</name>
        <name>Long</name>
        <name evidence="47">Basigin-1</name>
        <sequence type="displayed"/>
    </isoform>
    <isoform>
        <id>P35613-2</id>
        <name>2</name>
        <name>Short</name>
        <name evidence="47">Basigin-2</name>
        <sequence type="described" ref="VSP_011501"/>
    </isoform>
    <isoform>
        <id>P35613-3</id>
        <name>3</name>
        <name>Basigin-3</name>
        <sequence type="described" ref="VSP_043225"/>
    </isoform>
    <isoform>
        <id>P35613-4</id>
        <name>4</name>
        <name>Basigin-4</name>
        <sequence type="described" ref="VSP_043226 VSP_043227"/>
    </isoform>
</comment>
<comment type="tissue specificity">
    <molecule>Isoform 1</molecule>
    <text evidence="33">Retina-specific (PubMed:25957687). Expressed in retinal cone photoreceptors (at protein level) (PubMed:25957687).</text>
</comment>
<comment type="tissue specificity">
    <molecule>Isoform 2</molecule>
    <text evidence="10 26 34 36">Expressed in erythrocytes (at protein level) (PubMed:26195724, PubMed:28409866). Highly expressed in melanoma cell lines (at protein level) (PubMed:11992541). Highly expressed in the heart, kidney, skeletal muscle and testis (PubMed:21536654).</text>
</comment>
<comment type="tissue specificity">
    <molecule>Isoform 3</molecule>
    <text evidence="26">Highly expressed in the bone marrow, fetal liver, lung, testis and thymus.</text>
</comment>
<comment type="tissue specificity">
    <molecule>Isoform 4</molecule>
    <text evidence="26">Highly expressed in the bone marrow, fetal liver, lung, testis and thymus.</text>
</comment>
<comment type="PTM">
    <molecule>Isoform 2</molecule>
    <text evidence="26">N-glycosylated.</text>
</comment>
<comment type="PTM">
    <molecule>Isoform 3</molecule>
    <text evidence="26">N-glycosylated.</text>
</comment>
<comment type="PTM">
    <molecule>Isoform 4</molecule>
    <text evidence="26">N-glycosylated.</text>
</comment>
<comment type="biotechnology">
    <molecule>Isoform 2</molecule>
    <text evidence="34">Potential candidate for the development of parasite blood stage vaccines. In vitro and in vivo, neutralizing antibodies are capable of inhibiting merozoite invasion of host erythrocytes.</text>
</comment>
<comment type="miscellaneous">
    <molecule>Isoform 3</molecule>
    <text evidence="26">Produced by alternative promoter usage.</text>
</comment>
<comment type="miscellaneous">
    <molecule>Isoform 4</molecule>
    <text evidence="26">Produced by alternative promoter usage.</text>
</comment>
<gene>
    <name evidence="51" type="primary">BSG</name>
    <name type="ORF">UNQ6505/PRO21383</name>
</gene>
<evidence type="ECO:0000250" key="1">
    <source>
        <dbReference type="UniProtKB" id="P17790"/>
    </source>
</evidence>
<evidence type="ECO:0000250" key="2">
    <source>
        <dbReference type="UniProtKB" id="P18572"/>
    </source>
</evidence>
<evidence type="ECO:0000250" key="3">
    <source>
        <dbReference type="UniProtKB" id="P26453"/>
    </source>
</evidence>
<evidence type="ECO:0000255" key="4"/>
<evidence type="ECO:0000255" key="5">
    <source>
        <dbReference type="PROSITE-ProRule" id="PRU00114"/>
    </source>
</evidence>
<evidence type="ECO:0000256" key="6">
    <source>
        <dbReference type="SAM" id="MobiDB-lite"/>
    </source>
</evidence>
<evidence type="ECO:0000269" key="7">
    <source>
    </source>
</evidence>
<evidence type="ECO:0000269" key="8">
    <source>
    </source>
</evidence>
<evidence type="ECO:0000269" key="9">
    <source>
    </source>
</evidence>
<evidence type="ECO:0000269" key="10">
    <source>
    </source>
</evidence>
<evidence type="ECO:0000269" key="11">
    <source>
    </source>
</evidence>
<evidence type="ECO:0000269" key="12">
    <source>
    </source>
</evidence>
<evidence type="ECO:0000269" key="13">
    <source>
    </source>
</evidence>
<evidence type="ECO:0000269" key="14">
    <source>
    </source>
</evidence>
<evidence type="ECO:0000269" key="15">
    <source>
    </source>
</evidence>
<evidence type="ECO:0000269" key="16">
    <source>
    </source>
</evidence>
<evidence type="ECO:0000269" key="17">
    <source>
    </source>
</evidence>
<evidence type="ECO:0000269" key="18">
    <source>
    </source>
</evidence>
<evidence type="ECO:0000269" key="19">
    <source>
    </source>
</evidence>
<evidence type="ECO:0000269" key="20">
    <source>
    </source>
</evidence>
<evidence type="ECO:0000269" key="21">
    <source>
    </source>
</evidence>
<evidence type="ECO:0000269" key="22">
    <source>
    </source>
</evidence>
<evidence type="ECO:0000269" key="23">
    <source>
    </source>
</evidence>
<evidence type="ECO:0000269" key="24">
    <source>
    </source>
</evidence>
<evidence type="ECO:0000269" key="25">
    <source>
    </source>
</evidence>
<evidence type="ECO:0000269" key="26">
    <source>
    </source>
</evidence>
<evidence type="ECO:0000269" key="27">
    <source>
    </source>
</evidence>
<evidence type="ECO:0000269" key="28">
    <source>
    </source>
</evidence>
<evidence type="ECO:0000269" key="29">
    <source>
    </source>
</evidence>
<evidence type="ECO:0000269" key="30">
    <source>
    </source>
</evidence>
<evidence type="ECO:0000269" key="31">
    <source>
    </source>
</evidence>
<evidence type="ECO:0000269" key="32">
    <source>
    </source>
</evidence>
<evidence type="ECO:0000269" key="33">
    <source>
    </source>
</evidence>
<evidence type="ECO:0000269" key="34">
    <source>
    </source>
</evidence>
<evidence type="ECO:0000269" key="35">
    <source>
    </source>
</evidence>
<evidence type="ECO:0000269" key="36">
    <source>
    </source>
</evidence>
<evidence type="ECO:0000269" key="37">
    <source>
    </source>
</evidence>
<evidence type="ECO:0000269" key="38">
    <source>
    </source>
</evidence>
<evidence type="ECO:0000269" key="39">
    <source>
    </source>
</evidence>
<evidence type="ECO:0000269" key="40">
    <source>
    </source>
</evidence>
<evidence type="ECO:0000269" key="41">
    <source>
    </source>
</evidence>
<evidence type="ECO:0000269" key="42">
    <source ref="60"/>
</evidence>
<evidence type="ECO:0000303" key="43">
    <source>
    </source>
</evidence>
<evidence type="ECO:0000303" key="44">
    <source>
    </source>
</evidence>
<evidence type="ECO:0000303" key="45">
    <source>
    </source>
</evidence>
<evidence type="ECO:0000303" key="46">
    <source>
    </source>
</evidence>
<evidence type="ECO:0000303" key="47">
    <source>
    </source>
</evidence>
<evidence type="ECO:0000303" key="48">
    <source>
    </source>
</evidence>
<evidence type="ECO:0000303" key="49">
    <source>
    </source>
</evidence>
<evidence type="ECO:0000305" key="50"/>
<evidence type="ECO:0000312" key="51">
    <source>
        <dbReference type="HGNC" id="HGNC:1116"/>
    </source>
</evidence>
<evidence type="ECO:0007744" key="52">
    <source>
        <dbReference type="PDB" id="3B5H"/>
    </source>
</evidence>
<evidence type="ECO:0007744" key="53">
    <source>
        <dbReference type="PDB" id="3I84"/>
    </source>
</evidence>
<evidence type="ECO:0007744" key="54">
    <source>
        <dbReference type="PDB" id="3QQN"/>
    </source>
</evidence>
<evidence type="ECO:0007744" key="55">
    <source>
        <dbReference type="PDB" id="3QR2"/>
    </source>
</evidence>
<evidence type="ECO:0007744" key="56">
    <source>
        <dbReference type="PDB" id="4U0Q"/>
    </source>
</evidence>
<evidence type="ECO:0007744" key="57">
    <source>
        <dbReference type="PDB" id="5X0T"/>
    </source>
</evidence>
<evidence type="ECO:0007744" key="58">
    <source>
        <dbReference type="PDB" id="6LYY"/>
    </source>
</evidence>
<evidence type="ECO:0007744" key="59">
    <source>
        <dbReference type="PDB" id="6LZ0"/>
    </source>
</evidence>
<evidence type="ECO:0007744" key="60">
    <source>
        <dbReference type="PDB" id="7CKO"/>
    </source>
</evidence>
<evidence type="ECO:0007744" key="61">
    <source>
        <dbReference type="PDB" id="7CKR"/>
    </source>
</evidence>
<evidence type="ECO:0007744" key="62">
    <source>
        <dbReference type="PDB" id="7DA5"/>
    </source>
</evidence>
<evidence type="ECO:0007744" key="63">
    <source>
    </source>
</evidence>
<evidence type="ECO:0007744" key="64">
    <source>
    </source>
</evidence>
<evidence type="ECO:0007744" key="65">
    <source>
    </source>
</evidence>
<evidence type="ECO:0007744" key="66">
    <source>
    </source>
</evidence>
<evidence type="ECO:0007744" key="67">
    <source>
    </source>
</evidence>
<evidence type="ECO:0007829" key="68">
    <source>
        <dbReference type="PDB" id="3B5H"/>
    </source>
</evidence>
<evidence type="ECO:0007829" key="69">
    <source>
        <dbReference type="PDB" id="3I84"/>
    </source>
</evidence>
<evidence type="ECO:0007829" key="70">
    <source>
        <dbReference type="PDB" id="3QR2"/>
    </source>
</evidence>
<evidence type="ECO:0007829" key="71">
    <source>
        <dbReference type="PDB" id="7CKO"/>
    </source>
</evidence>
<evidence type="ECO:0007829" key="72">
    <source>
        <dbReference type="PDB" id="7DAA"/>
    </source>
</evidence>
<evidence type="ECO:0007829" key="73">
    <source>
        <dbReference type="PDB" id="7XY8"/>
    </source>
</evidence>
<name>BASI_HUMAN</name>
<keyword id="KW-0002">3D-structure</keyword>
<keyword id="KW-0877">Alternative promoter usage</keyword>
<keyword id="KW-0025">Alternative splicing</keyword>
<keyword id="KW-0037">Angiogenesis</keyword>
<keyword id="KW-0095">Blood group antigen</keyword>
<keyword id="KW-1003">Cell membrane</keyword>
<keyword id="KW-0966">Cell projection</keyword>
<keyword id="KW-0903">Direct protein sequencing</keyword>
<keyword id="KW-1015">Disulfide bond</keyword>
<keyword id="KW-0256">Endoplasmic reticulum</keyword>
<keyword id="KW-0967">Endosome</keyword>
<keyword id="KW-0325">Glycoprotein</keyword>
<keyword id="KW-1183">Host cell receptor for virus entry</keyword>
<keyword id="KW-0945">Host-virus interaction</keyword>
<keyword id="KW-0393">Immunoglobulin domain</keyword>
<keyword id="KW-0430">Lectin</keyword>
<keyword id="KW-0465">Mannose-binding</keyword>
<keyword id="KW-0472">Membrane</keyword>
<keyword id="KW-0597">Phosphoprotein</keyword>
<keyword id="KW-1267">Proteomics identification</keyword>
<keyword id="KW-0675">Receptor</keyword>
<keyword id="KW-1185">Reference proteome</keyword>
<keyword id="KW-0732">Signal</keyword>
<keyword id="KW-0812">Transmembrane</keyword>
<keyword id="KW-1133">Transmembrane helix</keyword>
<sequence length="385" mass="42200">MAAALFVLLGFALLGTHGASGAAGFVQAPLSQQRWVGGSVELHCEAVGSPVPEIQWWFEGQGPNDTCSQLWDGARLDRVHIHATYHQHAASTISIDTLVEEDTGTYECRASNDPDRNHLTRAPRVKWVRAQAVVLVLEPGTVFTTVEDLGSKILLTCSLNDSATEVTGHRWLKGGVVLKEDALPGQKTEFKVDSDDQWGEYSCVFLPEPMGTANIQLHGPPRVKAVKSSEHINEGETAMLVCKSESVPPVTDWAWYKITDSEDKALMNGSESRFFVSSSQGRSELHIENLNMEADPGQYRCNGTSSKGSDQAIITLRVRSHLAALWPFLGIVAEVLVLVTIIFIYEKRRKPEDVLDDDDAGSAPLKSSGQHQNDKGKNVRQRNSS</sequence>
<organism>
    <name type="scientific">Homo sapiens</name>
    <name type="common">Human</name>
    <dbReference type="NCBI Taxonomy" id="9606"/>
    <lineage>
        <taxon>Eukaryota</taxon>
        <taxon>Metazoa</taxon>
        <taxon>Chordata</taxon>
        <taxon>Craniata</taxon>
        <taxon>Vertebrata</taxon>
        <taxon>Euteleostomi</taxon>
        <taxon>Mammalia</taxon>
        <taxon>Eutheria</taxon>
        <taxon>Euarchontoglires</taxon>
        <taxon>Primates</taxon>
        <taxon>Haplorrhini</taxon>
        <taxon>Catarrhini</taxon>
        <taxon>Hominidae</taxon>
        <taxon>Homo</taxon>
    </lineage>
</organism>
<protein>
    <recommendedName>
        <fullName evidence="50">Basigin</fullName>
    </recommendedName>
    <alternativeName>
        <fullName>5F7</fullName>
    </alternativeName>
    <alternativeName>
        <fullName>Collagenase stimulatory factor</fullName>
    </alternativeName>
    <alternativeName>
        <fullName>Extracellular matrix metalloproteinase inducer</fullName>
        <shortName>EMMPRIN</shortName>
    </alternativeName>
    <alternativeName>
        <fullName evidence="44">Hepatoma-associated antigen</fullName>
        <shortName evidence="44">HAb18G</shortName>
    </alternativeName>
    <alternativeName>
        <fullName>Leukocyte activation antigen M6</fullName>
    </alternativeName>
    <alternativeName>
        <fullName>OK blood group antigen</fullName>
    </alternativeName>
    <alternativeName>
        <fullName>Tumor cell-derived collagenase stimulatory factor</fullName>
        <shortName>TCSF</shortName>
    </alternativeName>
    <cdAntigenName>CD147</cdAntigenName>
</protein>
<accession>P35613</accession>
<accession>A6NJW1</accession>
<accession>D3YLG5</accession>
<accession>Q7Z796</accession>
<accession>Q8IZL7</accession>
<reference key="1">
    <citation type="journal article" date="1992" name="J. Immunol.">
        <title>Human leukocyte activation antigen M6, a member of the Ig superfamily, is the species homologue of rat OX-47, mouse basigin, and chicken HT7 molecule.</title>
        <authorList>
            <person name="Kasinrerk W."/>
            <person name="Fiebiger E."/>
            <person name="Stefanova I."/>
            <person name="Baumruker T."/>
            <person name="Knapp W."/>
            <person name="Stockinger H."/>
        </authorList>
    </citation>
    <scope>NUCLEOTIDE SEQUENCE [MRNA] (ISOFORM 2)</scope>
</reference>
<reference key="2">
    <citation type="journal article" date="1991" name="J. Biochem.">
        <title>The basigin group of the immunoglobulin superfamily: complete conservation of a segment in and around transmembrane domains of human and mouse basigin and chicken HT7 antigen.</title>
        <authorList>
            <person name="Miyauchi T."/>
            <person name="Masuzawa Y."/>
            <person name="Muramatsu T."/>
        </authorList>
    </citation>
    <scope>NUCLEOTIDE SEQUENCE [GENOMIC DNA] (ISOFORM 2)</scope>
</reference>
<reference key="3">
    <citation type="journal article" date="1995" name="Cancer Res.">
        <title>The human tumor cell-derived collagenase stimulatory factor (renamed EMMPRIN) is a member of the immunoglobulin superfamily.</title>
        <authorList>
            <person name="Biswas C."/>
            <person name="Zhang Y."/>
            <person name="Decastro R."/>
            <person name="Guo H."/>
            <person name="Nakamura T."/>
            <person name="Kataoka H."/>
            <person name="Nabeshima K."/>
        </authorList>
    </citation>
    <scope>NUCLEOTIDE SEQUENCE [MRNA] (ISOFORM 2)</scope>
</reference>
<reference key="4">
    <citation type="submission" date="1996-03" db="EMBL/GenBank/DDBJ databases">
        <authorList>
            <person name="Wakasugi H."/>
            <person name="Scamps C."/>
            <person name="Yang G."/>
            <person name="Vancong N."/>
            <person name="Bernheim A."/>
            <person name="Tursz T."/>
            <person name="Harada N."/>
        </authorList>
    </citation>
    <scope>NUCLEOTIDE SEQUENCE (ISOFORM 2)</scope>
</reference>
<reference key="5">
    <citation type="submission" date="1996-03" db="EMBL/GenBank/DDBJ databases">
        <authorList>
            <person name="Decastro R."/>
            <person name="Zhang Y."/>
            <person name="Kataoka H."/>
            <person name="Coon J."/>
            <person name="Biswas C."/>
        </authorList>
    </citation>
    <scope>NUCLEOTIDE SEQUENCE (ISOFORM 2)</scope>
</reference>
<reference key="6">
    <citation type="journal article" date="1998" name="Gene">
        <title>Characterization of the gene for human EMMPRIN, a tumor cell surface inducer of matrix metalloproteinases.</title>
        <authorList>
            <person name="Guo H."/>
            <person name="Majmudar G."/>
            <person name="Jensen T.C."/>
            <person name="Biswas C."/>
            <person name="Toole B.P."/>
            <person name="Gordon M.K."/>
        </authorList>
    </citation>
    <scope>NUCLEOTIDE SEQUENCE [GENOMIC DNA] (ISOFORM 2)</scope>
</reference>
<reference key="7">
    <citation type="submission" date="2001-10" db="EMBL/GenBank/DDBJ databases">
        <title>Regulation of EMMPRIN/CD147 expression and its function of controlling matrix metalloproteinases production and cell-surface localization in co-culture of human uterine cervical carcinoma SKG-II cells and human uterine cervical fibroblasts.</title>
        <authorList>
            <person name="Sato T."/>
            <person name="Takita M."/>
            <person name="Noguchi Y."/>
            <person name="Hirata M."/>
            <person name="Sakai T."/>
            <person name="Ito A."/>
        </authorList>
    </citation>
    <scope>NUCLEOTIDE SEQUENCE (ISOFORM 2)</scope>
</reference>
<reference key="8">
    <citation type="submission" date="2002-05" db="EMBL/GenBank/DDBJ databases">
        <authorList>
            <person name="Kim D."/>
            <person name="Kanai Y."/>
            <person name="Choi H."/>
            <person name="Shin H."/>
            <person name="Kim J."/>
            <person name="Teraoka H."/>
            <person name="Shigeta Y."/>
            <person name="Chairoungdua A."/>
            <person name="Babu E."/>
            <person name="Anzai N."/>
            <person name="Iribe Y."/>
            <person name="Endou H."/>
        </authorList>
    </citation>
    <scope>NUCLEOTIDE SEQUENCE (ISOFORM 2)</scope>
</reference>
<reference key="9">
    <citation type="journal article" date="2003" name="Invest. Ophthalmol. Vis. Sci.">
        <title>Retina-specific expression of 5A11/Basigin-2, a member of the immunoglobulin gene superfamily.</title>
        <authorList>
            <person name="Ochrietor J.D."/>
            <person name="Moroz T.P."/>
            <person name="van Ekeris L."/>
            <person name="Clamp M.F."/>
            <person name="Jefferson S.C."/>
            <person name="deCarvalho A.C."/>
            <person name="Fadool J.M."/>
            <person name="Wistow G."/>
            <person name="Muramatsu T."/>
            <person name="Linser P.J."/>
        </authorList>
    </citation>
    <scope>NUCLEOTIDE SEQUENCE (ISOFORM 1)</scope>
    <source>
        <tissue>Retina</tissue>
    </source>
</reference>
<reference key="10">
    <citation type="journal article" date="2011" name="Mol. Cell. Biol.">
        <title>Characterization of basigin isoforms and the inhibitory function of basigin-3 in human hepatocellular carcinoma proliferation and invasion.</title>
        <authorList>
            <person name="Liao C.G."/>
            <person name="Kong L.M."/>
            <person name="Song F."/>
            <person name="Xing J.L."/>
            <person name="Wang L.X."/>
            <person name="Sun Z.J."/>
            <person name="Tang H."/>
            <person name="Yao H."/>
            <person name="Zhang Y."/>
            <person name="Wang L."/>
            <person name="Wang Y."/>
            <person name="Yang X.M."/>
            <person name="Li Y."/>
            <person name="Chen Z.N."/>
        </authorList>
    </citation>
    <scope>NUCLEOTIDE SEQUENCE [MRNA] (ISOFORMS 3 AND 4)</scope>
    <scope>SUBUNIT (ISOFORMS 2 AND 3)</scope>
    <scope>SUBCELLULAR LOCATION (ISOFORMS 2; 3 AND 4)</scope>
    <scope>ALTERNATIVE PROMOTER USAGE</scope>
    <scope>TISSUE SPECIFICITY (ISOFORMS 2; 3 AND 4)</scope>
    <scope>GLYCOSYLATION (ISOFORMS 2; 3 AND 4)</scope>
</reference>
<reference key="11">
    <citation type="journal article" date="2003" name="Genome Res.">
        <title>The secreted protein discovery initiative (SPDI), a large-scale effort to identify novel human secreted and transmembrane proteins: a bioinformatics assessment.</title>
        <authorList>
            <person name="Clark H.F."/>
            <person name="Gurney A.L."/>
            <person name="Abaya E."/>
            <person name="Baker K."/>
            <person name="Baldwin D.T."/>
            <person name="Brush J."/>
            <person name="Chen J."/>
            <person name="Chow B."/>
            <person name="Chui C."/>
            <person name="Crowley C."/>
            <person name="Currell B."/>
            <person name="Deuel B."/>
            <person name="Dowd P."/>
            <person name="Eaton D."/>
            <person name="Foster J.S."/>
            <person name="Grimaldi C."/>
            <person name="Gu Q."/>
            <person name="Hass P.E."/>
            <person name="Heldens S."/>
            <person name="Huang A."/>
            <person name="Kim H.S."/>
            <person name="Klimowski L."/>
            <person name="Jin Y."/>
            <person name="Johnson S."/>
            <person name="Lee J."/>
            <person name="Lewis L."/>
            <person name="Liao D."/>
            <person name="Mark M.R."/>
            <person name="Robbie E."/>
            <person name="Sanchez C."/>
            <person name="Schoenfeld J."/>
            <person name="Seshagiri S."/>
            <person name="Simmons L."/>
            <person name="Singh J."/>
            <person name="Smith V."/>
            <person name="Stinson J."/>
            <person name="Vagts A."/>
            <person name="Vandlen R.L."/>
            <person name="Watanabe C."/>
            <person name="Wieand D."/>
            <person name="Woods K."/>
            <person name="Xie M.-H."/>
            <person name="Yansura D.G."/>
            <person name="Yi S."/>
            <person name="Yu G."/>
            <person name="Yuan J."/>
            <person name="Zhang M."/>
            <person name="Zhang Z."/>
            <person name="Goddard A.D."/>
            <person name="Wood W.I."/>
            <person name="Godowski P.J."/>
            <person name="Gray A.M."/>
        </authorList>
    </citation>
    <scope>NUCLEOTIDE SEQUENCE [LARGE SCALE MRNA] (ISOFORM 1)</scope>
</reference>
<reference key="12">
    <citation type="submission" date="2005-02" db="EMBL/GenBank/DDBJ databases">
        <authorList>
            <consortium name="SeattleSNPs variation discovery resource"/>
        </authorList>
    </citation>
    <scope>NUCLEOTIDE SEQUENCE [GENOMIC DNA]</scope>
</reference>
<reference key="13">
    <citation type="journal article" date="2004" name="Nature">
        <title>The DNA sequence and biology of human chromosome 19.</title>
        <authorList>
            <person name="Grimwood J."/>
            <person name="Gordon L.A."/>
            <person name="Olsen A.S."/>
            <person name="Terry A."/>
            <person name="Schmutz J."/>
            <person name="Lamerdin J.E."/>
            <person name="Hellsten U."/>
            <person name="Goodstein D."/>
            <person name="Couronne O."/>
            <person name="Tran-Gyamfi M."/>
            <person name="Aerts A."/>
            <person name="Altherr M."/>
            <person name="Ashworth L."/>
            <person name="Bajorek E."/>
            <person name="Black S."/>
            <person name="Branscomb E."/>
            <person name="Caenepeel S."/>
            <person name="Carrano A.V."/>
            <person name="Caoile C."/>
            <person name="Chan Y.M."/>
            <person name="Christensen M."/>
            <person name="Cleland C.A."/>
            <person name="Copeland A."/>
            <person name="Dalin E."/>
            <person name="Dehal P."/>
            <person name="Denys M."/>
            <person name="Detter J.C."/>
            <person name="Escobar J."/>
            <person name="Flowers D."/>
            <person name="Fotopulos D."/>
            <person name="Garcia C."/>
            <person name="Georgescu A.M."/>
            <person name="Glavina T."/>
            <person name="Gomez M."/>
            <person name="Gonzales E."/>
            <person name="Groza M."/>
            <person name="Hammon N."/>
            <person name="Hawkins T."/>
            <person name="Haydu L."/>
            <person name="Ho I."/>
            <person name="Huang W."/>
            <person name="Israni S."/>
            <person name="Jett J."/>
            <person name="Kadner K."/>
            <person name="Kimball H."/>
            <person name="Kobayashi A."/>
            <person name="Larionov V."/>
            <person name="Leem S.-H."/>
            <person name="Lopez F."/>
            <person name="Lou Y."/>
            <person name="Lowry S."/>
            <person name="Malfatti S."/>
            <person name="Martinez D."/>
            <person name="McCready P.M."/>
            <person name="Medina C."/>
            <person name="Morgan J."/>
            <person name="Nelson K."/>
            <person name="Nolan M."/>
            <person name="Ovcharenko I."/>
            <person name="Pitluck S."/>
            <person name="Pollard M."/>
            <person name="Popkie A.P."/>
            <person name="Predki P."/>
            <person name="Quan G."/>
            <person name="Ramirez L."/>
            <person name="Rash S."/>
            <person name="Retterer J."/>
            <person name="Rodriguez A."/>
            <person name="Rogers S."/>
            <person name="Salamov A."/>
            <person name="Salazar A."/>
            <person name="She X."/>
            <person name="Smith D."/>
            <person name="Slezak T."/>
            <person name="Solovyev V."/>
            <person name="Thayer N."/>
            <person name="Tice H."/>
            <person name="Tsai M."/>
            <person name="Ustaszewska A."/>
            <person name="Vo N."/>
            <person name="Wagner M."/>
            <person name="Wheeler J."/>
            <person name="Wu K."/>
            <person name="Xie G."/>
            <person name="Yang J."/>
            <person name="Dubchak I."/>
            <person name="Furey T.S."/>
            <person name="DeJong P."/>
            <person name="Dickson M."/>
            <person name="Gordon D."/>
            <person name="Eichler E.E."/>
            <person name="Pennacchio L.A."/>
            <person name="Richardson P."/>
            <person name="Stubbs L."/>
            <person name="Rokhsar D.S."/>
            <person name="Myers R.M."/>
            <person name="Rubin E.M."/>
            <person name="Lucas S.M."/>
        </authorList>
    </citation>
    <scope>NUCLEOTIDE SEQUENCE [LARGE SCALE GENOMIC DNA]</scope>
</reference>
<reference key="14">
    <citation type="submission" date="2005-07" db="EMBL/GenBank/DDBJ databases">
        <authorList>
            <person name="Mural R.J."/>
            <person name="Istrail S."/>
            <person name="Sutton G."/>
            <person name="Florea L."/>
            <person name="Halpern A.L."/>
            <person name="Mobarry C.M."/>
            <person name="Lippert R."/>
            <person name="Walenz B."/>
            <person name="Shatkay H."/>
            <person name="Dew I."/>
            <person name="Miller J.R."/>
            <person name="Flanigan M.J."/>
            <person name="Edwards N.J."/>
            <person name="Bolanos R."/>
            <person name="Fasulo D."/>
            <person name="Halldorsson B.V."/>
            <person name="Hannenhalli S."/>
            <person name="Turner R."/>
            <person name="Yooseph S."/>
            <person name="Lu F."/>
            <person name="Nusskern D.R."/>
            <person name="Shue B.C."/>
            <person name="Zheng X.H."/>
            <person name="Zhong F."/>
            <person name="Delcher A.L."/>
            <person name="Huson D.H."/>
            <person name="Kravitz S.A."/>
            <person name="Mouchard L."/>
            <person name="Reinert K."/>
            <person name="Remington K.A."/>
            <person name="Clark A.G."/>
            <person name="Waterman M.S."/>
            <person name="Eichler E.E."/>
            <person name="Adams M.D."/>
            <person name="Hunkapiller M.W."/>
            <person name="Myers E.W."/>
            <person name="Venter J.C."/>
        </authorList>
    </citation>
    <scope>NUCLEOTIDE SEQUENCE [LARGE SCALE GENOMIC DNA]</scope>
</reference>
<reference key="15">
    <citation type="journal article" date="2004" name="Genome Res.">
        <title>The status, quality, and expansion of the NIH full-length cDNA project: the Mammalian Gene Collection (MGC).</title>
        <authorList>
            <consortium name="The MGC Project Team"/>
        </authorList>
    </citation>
    <scope>NUCLEOTIDE SEQUENCE [LARGE SCALE MRNA] (ISOFORM 2)</scope>
    <source>
        <tissue>Eye</tissue>
    </source>
</reference>
<reference key="16">
    <citation type="journal article" date="2004" name="Protein Sci.">
        <title>Signal peptide prediction based on analysis of experimentally verified cleavage sites.</title>
        <authorList>
            <person name="Zhang Z."/>
            <person name="Henzel W.J."/>
        </authorList>
    </citation>
    <scope>PROTEIN SEQUENCE OF 22-36 (ISOFORM 1)</scope>
</reference>
<reference key="17">
    <citation type="journal article" date="1991" name="Arch. Biochem. Biophys.">
        <title>Partial sequencing and characterization of the tumor cell-derived collagenase stimulatory factor.</title>
        <authorList>
            <person name="Nabeshima K."/>
            <person name="Lane W.S."/>
            <person name="Biswas C."/>
        </authorList>
    </citation>
    <scope>PARTIAL PROTEIN SEQUENCE</scope>
    <scope>CHARACTERIZATION</scope>
</reference>
<reference key="18">
    <citation type="journal article" date="2001" name="Biochem. Biophys. Res. Commun.">
        <title>CD147 is a signaling receptor for cyclophilin B.</title>
        <authorList>
            <person name="Yurchenko V."/>
            <person name="O'Connor M."/>
            <person name="Dai W.W."/>
            <person name="Guo H."/>
            <person name="Toole B."/>
            <person name="Sherry B."/>
            <person name="Bukrinsky M."/>
        </authorList>
    </citation>
    <scope>FUNCTION (ISOFORM 2)</scope>
</reference>
<reference key="19">
    <citation type="journal article" date="2001" name="Proc. Natl. Acad. Sci. U.S.A.">
        <title>CD147 facilitates HIV-1 infection by interacting with virus-associated cyclophilin A.</title>
        <authorList>
            <person name="Pushkarsky T."/>
            <person name="Zybarth G."/>
            <person name="Dubrovsky L."/>
            <person name="Yurchenko V."/>
            <person name="Tang H."/>
            <person name="Guo H."/>
            <person name="Toole B."/>
            <person name="Sherry B."/>
            <person name="Bukrinsky M."/>
        </authorList>
    </citation>
    <scope>FUNCTION (ISOFORM 2) (MICROBIAL INFECTION)</scope>
    <scope>INTERACTION WITH PPIA (ISOFORM 2)</scope>
</reference>
<reference key="20">
    <citation type="journal article" date="2002" name="Clin. Exp. Metastasis">
        <title>EMMPRIN-mediated MMP regulation in tumor and endothelial cells.</title>
        <authorList>
            <person name="Caudroy S."/>
            <person name="Polette M."/>
            <person name="Nawrocki-Raby B."/>
            <person name="Cao J."/>
            <person name="Toole B.P."/>
            <person name="Zucker S."/>
            <person name="Birembaut P."/>
        </authorList>
    </citation>
    <scope>FUNCTION (ISOFORM 2)</scope>
</reference>
<reference key="21">
    <citation type="journal article" date="2002" name="Int. J. Cancer">
        <title>Basigin (CD147) is expressed on melanoma cells and induces tumor cell invasion by stimulating production of matrix metalloproteinases by fibroblasts.</title>
        <authorList>
            <person name="Kanekura T."/>
            <person name="Chen X."/>
            <person name="Kanzaki T."/>
        </authorList>
    </citation>
    <scope>FUNCTION (ISOFORM 2)</scope>
    <scope>SUBCELLULAR LOCATION (ISOFORM 2)</scope>
    <scope>TISSUE SPECIFICITY (ISOFORM 2)</scope>
</reference>
<reference key="22">
    <citation type="journal article" date="2002" name="J. Biol. Chem.">
        <title>Active site residues of cyclophilin A are crucial for its signaling activity via CD147.</title>
        <authorList>
            <person name="Yurchenko V."/>
            <person name="Zybarth G."/>
            <person name="O'Connor M."/>
            <person name="Dai W.W."/>
            <person name="Franchin G."/>
            <person name="Hao T."/>
            <person name="Guo H."/>
            <person name="Hung H.C."/>
            <person name="Toole B."/>
            <person name="Gallay P."/>
            <person name="Sherry B."/>
            <person name="Bukrinsky M."/>
        </authorList>
    </citation>
    <scope>FUNCTION (ISOFORM 2)</scope>
    <scope>MUTAGENESIS (ISOFORM 2)</scope>
    <scope>INTERACTION WITH PPIA (ISOFORM 2)</scope>
</reference>
<reference key="23">
    <citation type="journal article" date="2003" name="Histol. Histopathol.">
        <title>Basigin (CD147): a multifunctional transmembrane protein involved in reproduction, neural function, inflammation and tumor invasion.</title>
        <authorList>
            <person name="Muramatsu T."/>
            <person name="Miyauchi T."/>
        </authorList>
    </citation>
    <scope>REVIEW</scope>
</reference>
<reference key="24">
    <citation type="journal article" date="2003" name="Nat. Biotechnol.">
        <title>Identification and quantification of N-linked glycoproteins using hydrazide chemistry, stable isotope labeling and mass spectrometry.</title>
        <authorList>
            <person name="Zhang H."/>
            <person name="Li X.-J."/>
            <person name="Martin D.B."/>
            <person name="Aebersold R."/>
        </authorList>
    </citation>
    <scope>GLYCOSYLATION AT ASN-160 AND ASN-268</scope>
</reference>
<reference key="25">
    <citation type="journal article" date="2005" name="Cancer Res.">
        <title>Extracellular matrix metalloproteinase inducer stimulates tumor angiogenesis by elevating vascular endothelial cell growth factor and matrix metalloproteinases.</title>
        <authorList>
            <person name="Tang Y."/>
            <person name="Nakada M.T."/>
            <person name="Kesavan P."/>
            <person name="McCabe F."/>
            <person name="Millar H."/>
            <person name="Rafferty P."/>
            <person name="Bugelski P."/>
            <person name="Yan L."/>
        </authorList>
    </citation>
    <scope>FUNCTION (ISOFORM 2)</scope>
</reference>
<reference key="26">
    <citation type="journal article" date="2005" name="J. Infect. Dis.">
        <title>Function of HAb18G/CD147 in invasion of host cells by severe acute respiratory syndrome coronavirus.</title>
        <authorList>
            <person name="Chen Z."/>
            <person name="Mi L."/>
            <person name="Xu J."/>
            <person name="Yu J."/>
            <person name="Wang X."/>
            <person name="Jiang J."/>
            <person name="Xing J."/>
            <person name="Shang P."/>
            <person name="Qian A."/>
            <person name="Li Y."/>
            <person name="Shaw P.X."/>
            <person name="Wang J."/>
            <person name="Duan S."/>
            <person name="Ding J."/>
            <person name="Fan C."/>
            <person name="Zhang Y."/>
            <person name="Yang Y."/>
            <person name="Yu X."/>
            <person name="Feng Q."/>
            <person name="Li B."/>
            <person name="Yao X."/>
            <person name="Zhang Z."/>
            <person name="Li L."/>
            <person name="Xue X."/>
            <person name="Zhu P."/>
        </authorList>
    </citation>
    <scope>FUNCTION (ISOFORM 2) (MICROBIAL INFECTION)</scope>
    <scope>INTERACTION WITH PPIA (ISOFORM 2)</scope>
    <scope>SUBCELLULAR LOCATION (ISOFORM 2)</scope>
</reference>
<reference key="27">
    <citation type="journal article" date="2005" name="J. Biol. Chem.">
        <title>Cell surface expression of CD147/EMMPRIN is regulated by cyclophilin 60.</title>
        <authorList>
            <person name="Pushkarsky T."/>
            <person name="Yurchenko V."/>
            <person name="Vanpouille C."/>
            <person name="Brichacek B."/>
            <person name="Vaisman I."/>
            <person name="Hatakeyama S."/>
            <person name="Nakayama K.I."/>
            <person name="Sherry B."/>
            <person name="Bukrinsky M.I."/>
        </authorList>
    </citation>
    <scope>INTERACTION WITH PPIL2 (ISOFORM 2)</scope>
    <scope>SUBCELLULAR LOCATION (ISOFORM 2)</scope>
    <scope>MUTAGENESIS (ISOFORM 2)</scope>
</reference>
<reference key="28">
    <citation type="journal article" date="2006" name="Cell">
        <title>Global, in vivo, and site-specific phosphorylation dynamics in signaling networks.</title>
        <authorList>
            <person name="Olsen J.V."/>
            <person name="Blagoev B."/>
            <person name="Gnad F."/>
            <person name="Macek B."/>
            <person name="Kumar C."/>
            <person name="Mortensen P."/>
            <person name="Mann M."/>
        </authorList>
    </citation>
    <scope>PHOSPHORYLATION [LARGE SCALE ANALYSIS] AT SER-362</scope>
    <scope>IDENTIFICATION BY MASS SPECTROMETRY [LARGE SCALE ANALYSIS]</scope>
    <source>
        <tissue>Cervix carcinoma</tissue>
    </source>
</reference>
<reference key="29">
    <citation type="journal article" date="2006" name="J. Proteome Res.">
        <title>Proteomic and bioinformatic characterization of the biogenesis and function of melanosomes.</title>
        <authorList>
            <person name="Chi A."/>
            <person name="Valencia J.C."/>
            <person name="Hu Z.-Z."/>
            <person name="Watabe H."/>
            <person name="Yamaguchi H."/>
            <person name="Mangini N.J."/>
            <person name="Huang H."/>
            <person name="Canfield V.A."/>
            <person name="Cheng K.C."/>
            <person name="Yang F."/>
            <person name="Abe R."/>
            <person name="Yamagishi S."/>
            <person name="Shabanowitz J."/>
            <person name="Hearing V.J."/>
            <person name="Wu C."/>
            <person name="Appella E."/>
            <person name="Hunt D.F."/>
        </authorList>
    </citation>
    <scope>SUBCELLULAR LOCATION [LARGE SCALE ANALYSIS]</scope>
    <source>
        <tissue>Melanoma</tissue>
    </source>
</reference>
<reference key="30">
    <citation type="journal article" date="2006" name="Mol. Membr. Biol.">
        <title>The role of charged residues in the transmembrane helices of monocarboxylate transporter 1 and its ancillary protein basigin in determining plasma membrane expression and catalytic activity.</title>
        <authorList>
            <person name="Manoharan C."/>
            <person name="Wilson M.C."/>
            <person name="Sessions R.B."/>
            <person name="Halestrap A.P."/>
        </authorList>
    </citation>
    <scope>FUNCTION (ISOFORM 2)</scope>
    <scope>SUBCELLULAR LOCATION (ISOFORM 2)</scope>
    <scope>INTERACTION WITH SLC16A1 (ISOFORM 2)</scope>
</reference>
<reference key="31">
    <citation type="journal article" date="2007" name="Mol. Biol. Cell">
        <title>junction protein shrew-1 influences cell invasion and interacts with invasion-promoting protein CD147.</title>
        <authorList>
            <person name="Schreiner A."/>
            <person name="Ruonala M."/>
            <person name="Jakob V."/>
            <person name="Suthaus J."/>
            <person name="Boles E."/>
            <person name="Wouters F."/>
            <person name="Starzinski-Powitz A."/>
        </authorList>
    </citation>
    <scope>INTERACTION WITH AJAP1 (ISOFORM 2)</scope>
    <scope>SUBCELLULAR LOCATION (ISOFORM 2)</scope>
</reference>
<reference key="32">
    <citation type="journal article" date="2009" name="Anal. Chem.">
        <title>Lys-N and trypsin cover complementary parts of the phosphoproteome in a refined SCX-based approach.</title>
        <authorList>
            <person name="Gauci S."/>
            <person name="Helbig A.O."/>
            <person name="Slijper M."/>
            <person name="Krijgsveld J."/>
            <person name="Heck A.J."/>
            <person name="Mohammed S."/>
        </authorList>
    </citation>
    <scope>IDENTIFICATION BY MASS SPECTROMETRY [LARGE SCALE ANALYSIS]</scope>
</reference>
<reference key="33">
    <citation type="journal article" date="2009" name="Blood">
        <title>EMMPRIN promotes angiogenesis through hypoxia-inducible factor-2alpha-mediated regulation of soluble VEGF isoforms and their receptor VEGFR-2.</title>
        <authorList>
            <person name="Bougatef F."/>
            <person name="Quemener C."/>
            <person name="Kellouche S."/>
            <person name="Naimi B."/>
            <person name="Podgorniak M.P."/>
            <person name="Millot G."/>
            <person name="Gabison E.E."/>
            <person name="Calvo F."/>
            <person name="Dosquet C."/>
            <person name="Lebbe C."/>
            <person name="Menashi S."/>
            <person name="Mourah S."/>
        </authorList>
    </citation>
    <scope>FUNCTION (ISOFORM 2)</scope>
</reference>
<reference key="34">
    <citation type="journal article" date="2009" name="J. Proteome Res.">
        <title>Glycoproteomics analysis of human liver tissue by combination of multiple enzyme digestion and hydrazide chemistry.</title>
        <authorList>
            <person name="Chen R."/>
            <person name="Jiang X."/>
            <person name="Sun D."/>
            <person name="Han G."/>
            <person name="Wang F."/>
            <person name="Ye M."/>
            <person name="Wang L."/>
            <person name="Zou H."/>
        </authorList>
    </citation>
    <scope>GLYCOSYLATION [LARGE SCALE ANALYSIS] AT ASN-160 AND ASN-268</scope>
    <source>
        <tissue>Liver</tissue>
    </source>
</reference>
<reference key="35">
    <citation type="journal article" date="2009" name="Nat. Biotechnol.">
        <title>Mass-spectrometric identification and relative quantification of N-linked cell surface glycoproteins.</title>
        <authorList>
            <person name="Wollscheid B."/>
            <person name="Bausch-Fluck D."/>
            <person name="Henderson C."/>
            <person name="O'Brien R."/>
            <person name="Bibel M."/>
            <person name="Schiess R."/>
            <person name="Aebersold R."/>
            <person name="Watts J.D."/>
        </authorList>
    </citation>
    <scope>GLYCOSYLATION [LARGE SCALE ANALYSIS] AT ASN-160 AND ASN-268</scope>
    <source>
        <tissue>Leukemic T-cell</tissue>
    </source>
</reference>
<reference key="36">
    <citation type="journal article" date="2010" name="J. Virol.">
        <title>CD147/EMMPRIN acts as a functional entry receptor for measles virus on epithelial cells.</title>
        <authorList>
            <person name="Watanabe A."/>
            <person name="Yoneda M."/>
            <person name="Ikeda F."/>
            <person name="Terao-Muto Y."/>
            <person name="Sato H."/>
            <person name="Kai C."/>
        </authorList>
    </citation>
    <scope>FUNCTION (ISOFORM 2) (MICROBIAL INFECTION)</scope>
</reference>
<reference key="37">
    <citation type="journal article" date="2010" name="Sci. Signal.">
        <title>Quantitative phosphoproteomics reveals widespread full phosphorylation site occupancy during mitosis.</title>
        <authorList>
            <person name="Olsen J.V."/>
            <person name="Vermeulen M."/>
            <person name="Santamaria A."/>
            <person name="Kumar C."/>
            <person name="Miller M.L."/>
            <person name="Jensen L.J."/>
            <person name="Gnad F."/>
            <person name="Cox J."/>
            <person name="Jensen T.S."/>
            <person name="Nigg E.A."/>
            <person name="Brunak S."/>
            <person name="Mann M."/>
        </authorList>
    </citation>
    <scope>PHOSPHORYLATION [LARGE SCALE ANALYSIS] AT SER-362</scope>
    <scope>IDENTIFICATION BY MASS SPECTROMETRY [LARGE SCALE ANALYSIS]</scope>
    <source>
        <tissue>Cervix carcinoma</tissue>
    </source>
</reference>
<reference key="38">
    <citation type="journal article" date="2011" name="BMC Syst. Biol.">
        <title>Initial characterization of the human central proteome.</title>
        <authorList>
            <person name="Burkard T.R."/>
            <person name="Planyavsky M."/>
            <person name="Kaupe I."/>
            <person name="Breitwieser F.P."/>
            <person name="Buerckstuemmer T."/>
            <person name="Bennett K.L."/>
            <person name="Superti-Furga G."/>
            <person name="Colinge J."/>
        </authorList>
    </citation>
    <scope>IDENTIFICATION BY MASS SPECTROMETRY [LARGE SCALE ANALYSIS]</scope>
</reference>
<reference key="39">
    <citation type="journal article" date="2011" name="Invest. Ophthalmol. Vis. Sci.">
        <title>Juvenile cataract-associated mutation of solute carrier SLC16A12 impairs trafficking of the protein to the plasma membrane.</title>
        <authorList>
            <person name="Castorino J.J."/>
            <person name="Gallagher-Colombo S.M."/>
            <person name="Levin A.V."/>
            <person name="Fitzgerald P.G."/>
            <person name="Polishook J."/>
            <person name="Kloeckener-Gruissem B."/>
            <person name="Ostertag E."/>
            <person name="Philp N.J."/>
        </authorList>
    </citation>
    <scope>FUNCTION (ISOFORM 2)</scope>
    <scope>INTERACTION WITH SLC16A12 (ISOFORM 2)</scope>
</reference>
<reference key="40">
    <citation type="journal article" date="2011" name="J. Biol. Chem.">
        <title>Cyclophilin A (CyPA) induces chemotaxis independent of its peptidylprolyl cis-trans isomerase activity: direct binding between CyPA and the ectodomain of CD147.</title>
        <authorList>
            <person name="Song F."/>
            <person name="Zhang X."/>
            <person name="Ren X.B."/>
            <person name="Zhu P."/>
            <person name="Xu J."/>
            <person name="Wang L."/>
            <person name="Li Y.F."/>
            <person name="Zhong N."/>
            <person name="Ru Q."/>
            <person name="Zhang D.W."/>
            <person name="Jiang J.L."/>
            <person name="Xia B."/>
            <person name="Chen Z.N."/>
        </authorList>
    </citation>
    <scope>INTERACTION WITH PPIA</scope>
</reference>
<reference key="41">
    <citation type="journal article" date="2011" name="Nature">
        <title>Basigin is a receptor essential for erythrocyte invasion by Plasmodium falciparum.</title>
        <authorList>
            <person name="Crosnier C."/>
            <person name="Bustamante L.Y."/>
            <person name="Bartholdson S.J."/>
            <person name="Bei A.K."/>
            <person name="Theron M."/>
            <person name="Uchikawa M."/>
            <person name="Mboup S."/>
            <person name="Ndir O."/>
            <person name="Kwiatkowski D.P."/>
            <person name="Duraisingh M.T."/>
            <person name="Rayner J.C."/>
            <person name="Wright G.J."/>
        </authorList>
    </citation>
    <scope>FUNCTION (ISOFORMS 1 AND 2) (MICROBIAL INFECTION)</scope>
    <scope>INTERACTION WITH P.FALCIPARUM RH5 (ISOFORMS 1 AND 2) (MICROBIAL INFECTION)</scope>
    <scope>GLYCOSYLATION</scope>
    <scope>VARIANTS ASN-152; LEU-176; PRO-206; LYS-208 AND VAL-269</scope>
    <scope>MUTAGENESIS OF ASN-160; ASN-268 AND ASN-302</scope>
</reference>
<reference key="42">
    <citation type="journal article" date="2011" name="Sci. Signal.">
        <title>System-wide temporal characterization of the proteome and phosphoproteome of human embryonic stem cell differentiation.</title>
        <authorList>
            <person name="Rigbolt K.T."/>
            <person name="Prokhorova T.A."/>
            <person name="Akimov V."/>
            <person name="Henningsen J."/>
            <person name="Johansen P.T."/>
            <person name="Kratchmarova I."/>
            <person name="Kassem M."/>
            <person name="Mann M."/>
            <person name="Olsen J.V."/>
            <person name="Blagoev B."/>
        </authorList>
    </citation>
    <scope>PHOSPHORYLATION [LARGE SCALE ANALYSIS] AT SER-362</scope>
    <scope>IDENTIFICATION BY MASS SPECTROMETRY [LARGE SCALE ANALYSIS]</scope>
</reference>
<reference key="43">
    <citation type="journal article" date="2013" name="J. Proteome Res.">
        <title>Toward a comprehensive characterization of a human cancer cell phosphoproteome.</title>
        <authorList>
            <person name="Zhou H."/>
            <person name="Di Palma S."/>
            <person name="Preisinger C."/>
            <person name="Peng M."/>
            <person name="Polat A.N."/>
            <person name="Heck A.J."/>
            <person name="Mohammed S."/>
        </authorList>
    </citation>
    <scope>PHOSPHORYLATION [LARGE SCALE ANALYSIS] AT SER-362</scope>
    <scope>IDENTIFICATION BY MASS SPECTROMETRY [LARGE SCALE ANALYSIS]</scope>
    <source>
        <tissue>Cervix carcinoma</tissue>
        <tissue>Erythroleukemia</tissue>
    </source>
</reference>
<reference key="44">
    <citation type="journal article" date="2013" name="Proc. Natl. Acad. Sci. U.S.A.">
        <title>RH5-Basigin interaction plays a major role in the host tropism of Plasmodium falciparum.</title>
        <authorList>
            <person name="Wanaguru M."/>
            <person name="Liu W."/>
            <person name="Hahn B.H."/>
            <person name="Rayner J.C."/>
            <person name="Wright G.J."/>
        </authorList>
    </citation>
    <scope>INTERACTION WITH P.FALCIPARUM RH5 (ISOFORM 2) (MICROBIAL INFECTION)</scope>
    <scope>MUTAGENESIS OF (ISOFORM 2)</scope>
</reference>
<reference key="45">
    <citation type="journal article" date="2014" name="J. Proteomics">
        <title>An enzyme assisted RP-RPLC approach for in-depth analysis of human liver phosphoproteome.</title>
        <authorList>
            <person name="Bian Y."/>
            <person name="Song C."/>
            <person name="Cheng K."/>
            <person name="Dong M."/>
            <person name="Wang F."/>
            <person name="Huang J."/>
            <person name="Sun D."/>
            <person name="Wang L."/>
            <person name="Ye M."/>
            <person name="Zou H."/>
        </authorList>
    </citation>
    <scope>PHOSPHORYLATION [LARGE SCALE ANALYSIS] AT SER-362 AND SER-368</scope>
    <scope>IDENTIFICATION BY MASS SPECTROMETRY [LARGE SCALE ANALYSIS]</scope>
    <source>
        <tissue>Liver</tissue>
    </source>
</reference>
<reference key="46">
    <citation type="journal article" date="2015" name="Cell">
        <title>Rod-derived cone viability factor promotes cone survival by stimulating aerobic glycolysis.</title>
        <authorList>
            <person name="Ait-Ali N."/>
            <person name="Fridlich R."/>
            <person name="Millet-Puel G."/>
            <person name="Clerin E."/>
            <person name="Delalande F."/>
            <person name="Jaillard C."/>
            <person name="Blond F."/>
            <person name="Perrocheau L."/>
            <person name="Reichman S."/>
            <person name="Byrne L.C."/>
            <person name="Olivier-Bandini A."/>
            <person name="Bellalou J."/>
            <person name="Moyse E."/>
            <person name="Bouillaud F."/>
            <person name="Nicol X."/>
            <person name="Dalkara D."/>
            <person name="van Dorsselaer A."/>
            <person name="Sahel J.A."/>
            <person name="Leveillard T."/>
        </authorList>
    </citation>
    <scope>FUNCTION (ISOFORM 1)</scope>
    <scope>SUBCELLULAR LOCATION (ISOFORM 1)</scope>
    <scope>TISSUE SPECIFICITY (ISOFORM 1)</scope>
    <scope>INTERACTION WITH NXNL1 (ISOFORM 1)</scope>
</reference>
<reference key="47">
    <citation type="journal article" date="2015" name="J. Exp. Med.">
        <title>Basigin is a druggable target for host-oriented antimalarial interventions.</title>
        <authorList>
            <person name="Zenonos Z.A."/>
            <person name="Dummler S.K."/>
            <person name="Mueller-Sienerth N."/>
            <person name="Chen J."/>
            <person name="Preiser P.R."/>
            <person name="Rayner J.C."/>
            <person name="Wright G.J."/>
        </authorList>
    </citation>
    <scope>FUNCTION (ISOFORM 2) (MICROBIAL INFECTION)</scope>
    <scope>INTERACTION WITH P.FACILPARUM RH5 (ISOFORM 2)(MICROBIAL INFECTION)</scope>
    <scope>SUBCELLULAR LOCATION (ISOFORM 2)</scope>
    <scope>TISSUE SPECIFICITY (ISOFORM 2)</scope>
    <scope>BIOTECHNOLOGY (ISOFORM 2)</scope>
</reference>
<reference key="48">
    <citation type="journal article" date="2015" name="Oncotarget">
        <title>EMMPRIN/CD147 is a novel coreceptor of VEGFR-2 mediating its activation by VEGF.</title>
        <authorList>
            <person name="Khayati F."/>
            <person name="Perez-Cano L."/>
            <person name="Maouche K."/>
            <person name="Sadoux A."/>
            <person name="Boutalbi Z."/>
            <person name="Podgorniak M.P."/>
            <person name="Maskos U."/>
            <person name="Setterblad N."/>
            <person name="Janin A."/>
            <person name="Calvo F."/>
            <person name="Lebbe C."/>
            <person name="Menashi S."/>
            <person name="Fernandez-Recio J."/>
            <person name="Mourah S."/>
        </authorList>
    </citation>
    <scope>FUNCTION (ISOFORM 2)</scope>
    <scope>SUBCELLULAR LOCATION (ISOFORM 2)</scope>
    <scope>INTERACTION WITH VEGFA AND VEGFR2 (ISOFORM 2)</scope>
    <scope>MUTAGENESIS (ISOFORM 2)</scope>
    <scope>REGION (ISOFORM 2)</scope>
</reference>
<reference key="49">
    <citation type="journal article" date="2015" name="Proteomics">
        <title>N-terminome analysis of the human mitochondrial proteome.</title>
        <authorList>
            <person name="Vaca Jacome A.S."/>
            <person name="Rabilloud T."/>
            <person name="Schaeffer-Reiss C."/>
            <person name="Rompais M."/>
            <person name="Ayoub D."/>
            <person name="Lane L."/>
            <person name="Bairoch A."/>
            <person name="Van Dorsselaer A."/>
            <person name="Carapito C."/>
        </authorList>
    </citation>
    <scope>IDENTIFICATION BY MASS SPECTROMETRY [LARGE SCALE ANALYSIS]</scope>
</reference>
<reference key="50">
    <citation type="journal article" date="2016" name="Proc. Natl. Acad. Sci. U.S.A.">
        <title>Xkr8 phospholipid scrambling complex in apoptotic phosphatidylserine exposure.</title>
        <authorList>
            <person name="Suzuki J."/>
            <person name="Imanishi E."/>
            <person name="Nagata S."/>
        </authorList>
    </citation>
    <scope>INTERACTION WITH XKR8</scope>
</reference>
<reference key="51">
    <citation type="journal article" date="2017" name="Cell">
        <title>Type 2 diabetes variants disrupt function of SLC16A11 through two distinct mechanisms.</title>
        <authorList>
            <consortium name="MEDIA Consortium"/>
            <consortium name="SIGMA T2D Consortium"/>
            <person name="Rusu V."/>
            <person name="Hoch E."/>
            <person name="Mercader J.M."/>
            <person name="Tenen D.E."/>
            <person name="Gymrek M."/>
            <person name="Hartigan C.R."/>
            <person name="DeRan M."/>
            <person name="von Grotthuss M."/>
            <person name="Fontanillas P."/>
            <person name="Spooner A."/>
            <person name="Guzman G."/>
            <person name="Deik A.A."/>
            <person name="Pierce K.A."/>
            <person name="Dennis C."/>
            <person name="Clish C.B."/>
            <person name="Carr S.A."/>
            <person name="Wagner B.K."/>
            <person name="Schenone M."/>
            <person name="Ng M.C.Y."/>
            <person name="Chen B.H."/>
            <person name="Centeno-Cruz F."/>
            <person name="Zerrweck C."/>
            <person name="Orozco L."/>
            <person name="Altshuler D.M."/>
            <person name="Schreiber S.L."/>
            <person name="Florez J.C."/>
            <person name="Jacobs S.B.R."/>
            <person name="Lander E.S."/>
        </authorList>
    </citation>
    <scope>FUNCTION (ISOFORM 2)</scope>
    <scope>INTERACTION WITH SLC16A11 (ISOFORM 2)</scope>
</reference>
<reference key="52">
    <citation type="journal article" date="2017" name="Cell. Microbiol.">
        <title>P. falciparum RH5-Basigin interaction induces changes in the cytoskeleton of the host RBC.</title>
        <authorList>
            <person name="Aniweh Y."/>
            <person name="Gao X."/>
            <person name="Hao P."/>
            <person name="Meng W."/>
            <person name="Lai S.K."/>
            <person name="Gunalan K."/>
            <person name="Chu T.T."/>
            <person name="Sinha A."/>
            <person name="Lescar J."/>
            <person name="Chandramohanadas R."/>
            <person name="Li H.Y."/>
            <person name="Sze S.K."/>
            <person name="Preiser P.R."/>
        </authorList>
    </citation>
    <scope>FUNCTION (ISOFORM 2) (MICROBIAL INFECTION)</scope>
    <scope>SUBCELLULAR LOCATION (ISOFORM 2)</scope>
    <scope>TISSUE SPECIFICITY (ISOFORM 2)</scope>
</reference>
<reference key="53">
    <citation type="journal article" date="2018" name="MBio">
        <title>CD147 Promotes Entry of Pentamer-Expressing Human Cytomegalovirus into Epithelial and Endothelial Cells.</title>
        <authorList>
            <person name="Vanarsdall A.L."/>
            <person name="Pritchard S.R."/>
            <person name="Wisner T.W."/>
            <person name="Liu J."/>
            <person name="Jardetzky T.S."/>
            <person name="Johnson D.C."/>
        </authorList>
    </citation>
    <scope>FUNCTION (MICROBIAL INFECTION) (ISOFORM 2)</scope>
    <scope>SUBCELLULAR LOCATION (ISOFORM 2)</scope>
</reference>
<reference key="54">
    <citation type="journal article" date="2020" name="Stem. Cell. Rev. Rep.">
        <title>CD147 as a Target for COVID-19 Treatment: Suggested Effects of Azithromycin and Stem Cell Engagement.</title>
        <authorList>
            <person name="Ulrich H."/>
            <person name="Pillat M.M."/>
        </authorList>
    </citation>
    <scope>REVIEW ON FUNCTION (MICROBIAL FUNCTION)</scope>
    <scope>REVIEW ON INTERACTION WITH SARS-COV-2 SPIKE GLYCOPROTEIN (MICROBIAL FUNCTION)</scope>
</reference>
<reference key="55">
    <citation type="journal article" date="2021" name="Sci. Rep.">
        <title>No evidence for basigin/CD147 as a direct SARS-CoV-2 spike binding receptor.</title>
        <authorList>
            <person name="Shilts J."/>
            <person name="Crozier T.W.M."/>
            <person name="Greenwood E.J.D."/>
            <person name="Lehner P.J."/>
            <person name="Wright G.J."/>
        </authorList>
    </citation>
    <scope>FUNCTION (MICROBIAL FUNCTION)</scope>
    <scope>INTERACTION WITH SARS-COV-2 SPIKE GLYCOPROTEIN (MICROBIAL FUNCTION)</scope>
</reference>
<reference key="56">
    <citation type="journal article" date="2008" name="J. Biol. Chem.">
        <title>Crystal structure of HAb18G/CD147: implications for immunoglobulin superfamily homophilic adhesion.</title>
        <authorList>
            <person name="Yu X.-L."/>
            <person name="Hu T."/>
            <person name="Du J.-M."/>
            <person name="Ding J.-P."/>
            <person name="Yang X.-M."/>
            <person name="Zhang J."/>
            <person name="Yang B."/>
            <person name="Shen X."/>
            <person name="Zhang Z."/>
            <person name="Zhong W.-D."/>
            <person name="Wen N."/>
            <person name="Jiang H."/>
            <person name="Zhu P."/>
            <person name="Chen Z.-N."/>
        </authorList>
    </citation>
    <scope>X-RAY CRYSTALLOGRAPHY (2.8 ANGSTROMS) OF 140-321</scope>
    <scope>SUBUNIT (ISOFORM 2)</scope>
    <scope>DISULFIDE BONDS</scope>
</reference>
<reference key="57">
    <citation type="journal article" date="2009" name="Proteins">
        <title>Structure of the EMMPRIN N-terminal domain 1: dimerization via beta-strand swapping.</title>
        <authorList>
            <person name="Luo J."/>
            <person name="Teplyakov A."/>
            <person name="Obmolova G."/>
            <person name="Malia T."/>
            <person name="Wu S.-J."/>
            <person name="Beil E."/>
            <person name="Baker A."/>
            <person name="Swencki-Underwood B."/>
            <person name="Zhao Y."/>
            <person name="Sprenkle J."/>
            <person name="Dixon K."/>
            <person name="Sweet R."/>
            <person name="Gilliland G.L."/>
        </authorList>
    </citation>
    <scope>X-RAY CRYSTALLOGRAPHY (2.0 ANGSTROMS) OF 13-219</scope>
    <scope>IDENTIFICATION BY MASS SPECTROMETRY</scope>
    <scope>SUBUNIT (ISOFORM 1)</scope>
    <scope>DISULFIDE BONDS</scope>
</reference>
<reference evidence="54 55" key="58">
    <citation type="journal article" date="2011" name="J. Mol. Biol.">
        <title>The retinal specific CD147 Ig0 domain: from molecular structure to biological activity.</title>
        <authorList>
            <person name="Redzic J.S."/>
            <person name="Armstrong G.S."/>
            <person name="Isern N.G."/>
            <person name="Jones D.N."/>
            <person name="Kieft J.S."/>
            <person name="Eisenmesser E.Z."/>
        </authorList>
    </citation>
    <scope>X-RAY CRYSTALLOGRAPHY (2.30 ANGSTROMS) OF 23-138</scope>
    <scope>FUNCTION (ISOFORM 1)</scope>
    <scope>DISULFIDE BOND</scope>
    <scope>MUTAGENESIS OF CYS-67</scope>
</reference>
<reference evidence="56" key="59">
    <citation type="journal article" date="2014" name="Nature">
        <title>Structure of malaria invasion protein RH5 with erythrocyte basigin and blocking antibodies.</title>
        <authorList>
            <person name="Wright K.E."/>
            <person name="Hjerrild K.A."/>
            <person name="Bartlett J."/>
            <person name="Douglas A.D."/>
            <person name="Jin J."/>
            <person name="Brown R.E."/>
            <person name="Illingworth J.J."/>
            <person name="Ashfield R."/>
            <person name="Clemmensen S.B."/>
            <person name="de Jongh W.A."/>
            <person name="Draper S.J."/>
            <person name="Higgins M.K."/>
        </authorList>
    </citation>
    <scope>X-RAY CRYSTALLOGRAPHY (3.10 ANGSTROMS) OF 140-385</scope>
    <scope>INTERACTION WITH P.FACILPARUM RH5 (ISOFORM 2) (MICROBIAL INFECTION)</scope>
    <scope>DISULFIDE BONDS</scope>
</reference>
<reference evidence="57" key="60">
    <citation type="submission" date="2017-01" db="PDB data bank">
        <title>Crystal structure of CD147 C2 domain in complex with Fab of its monoclonal antibody.</title>
        <authorList>
            <person name="Zhang M.-Y."/>
            <person name="Lin P."/>
            <person name="Zhu P."/>
            <person name="Chen Z.-N."/>
        </authorList>
    </citation>
    <scope>X-RAY CRYSTALLOGRAPHY (2.50 ANGSTROMS) OF 138-217</scope>
    <scope>DISULFIDE BONDS</scope>
</reference>
<reference evidence="58 59 60 61 62" key="61">
    <citation type="journal article" date="2021" name="Cell">
        <title>Structural basis of human monocarboxylate transporter 1 inhibition by anti-cancer drug candidates.</title>
        <authorList>
            <person name="Wang N."/>
            <person name="Jiang X."/>
            <person name="Zhang S."/>
            <person name="Zhu A."/>
            <person name="Yuan Y."/>
            <person name="Xu H."/>
            <person name="Lei J."/>
            <person name="Yan C."/>
        </authorList>
    </citation>
    <scope>STRUCTURE BY ELECTRON MICROSCOPY (2.95 ANGSTROMS) OF 140-385 IN COMPLEX WITH INHIBITORS; LACTATE AND SLC16A1</scope>
</reference>
<reference key="62">
    <citation type="journal article" date="1997" name="Eur. J. Immunol.">
        <title>The Ok(a) blood group antigen is a marker for the M6 leukocyte activation antigen, the human homolog of OX-47 antigen, basigin and neurothelin, an immunoglobulin superfamily molecule that is widely expressed in human cells and tissues.</title>
        <authorList>
            <person name="Spring F.A."/>
            <person name="Holmes C.H."/>
            <person name="Simpson K.L."/>
            <person name="Mawby W.J."/>
            <person name="Mattes M.J."/>
            <person name="Okubo Y."/>
            <person name="Parsons S.F."/>
        </authorList>
    </citation>
    <scope>VARIANT LYS-208</scope>
</reference>
<reference key="63">
    <citation type="journal article" date="2020" name="Genes (Basel)">
        <title>COVID-19 and Genetic Variants of Protein Involved in the SARS-CoV-2 Entry into the Host Cells.</title>
        <authorList>
            <person name="Latini A."/>
            <person name="Agolini E."/>
            <person name="Novelli A."/>
            <person name="Borgiani P."/>
            <person name="Giannini R."/>
            <person name="Gravina P."/>
            <person name="Smarrazzo A."/>
            <person name="Dauri M."/>
            <person name="Andreoni M."/>
            <person name="Rogliani P."/>
            <person name="Bernardini S."/>
            <person name="Helmer-Citterich M."/>
            <person name="Biancolella M."/>
            <person name="Novelli G."/>
        </authorList>
    </citation>
    <scope>VARIANTS VAL-13; ALA-16 AND PHE-26</scope>
</reference>
<dbReference type="EMBL" id="X64364">
    <property type="protein sequence ID" value="CAA45716.1"/>
    <property type="molecule type" value="mRNA"/>
</dbReference>
<dbReference type="EMBL" id="D45131">
    <property type="protein sequence ID" value="BAA08109.1"/>
    <property type="molecule type" value="mRNA"/>
</dbReference>
<dbReference type="EMBL" id="L10240">
    <property type="protein sequence ID" value="AAA68936.1"/>
    <property type="molecule type" value="mRNA"/>
</dbReference>
<dbReference type="EMBL" id="M87879">
    <property type="protein sequence ID" value="AAA91084.1"/>
    <property type="molecule type" value="mRNA"/>
</dbReference>
<dbReference type="EMBL" id="L20471">
    <property type="protein sequence ID" value="AAB41120.1"/>
    <property type="molecule type" value="mRNA"/>
</dbReference>
<dbReference type="EMBL" id="AF042854">
    <property type="protein sequence ID" value="AAD10704.1"/>
    <property type="molecule type" value="Genomic_DNA"/>
</dbReference>
<dbReference type="EMBL" id="AF042848">
    <property type="protein sequence ID" value="AAD10704.1"/>
    <property type="status" value="JOINED"/>
    <property type="molecule type" value="Genomic_DNA"/>
</dbReference>
<dbReference type="EMBL" id="AF042849">
    <property type="protein sequence ID" value="AAD10704.1"/>
    <property type="status" value="JOINED"/>
    <property type="molecule type" value="Genomic_DNA"/>
</dbReference>
<dbReference type="EMBL" id="AF042850">
    <property type="protein sequence ID" value="AAD10704.1"/>
    <property type="status" value="JOINED"/>
    <property type="molecule type" value="Genomic_DNA"/>
</dbReference>
<dbReference type="EMBL" id="AF042851">
    <property type="protein sequence ID" value="AAD10704.1"/>
    <property type="status" value="JOINED"/>
    <property type="molecule type" value="Genomic_DNA"/>
</dbReference>
<dbReference type="EMBL" id="AF042852">
    <property type="protein sequence ID" value="AAD10704.1"/>
    <property type="status" value="JOINED"/>
    <property type="molecule type" value="Genomic_DNA"/>
</dbReference>
<dbReference type="EMBL" id="AF042853">
    <property type="protein sequence ID" value="AAD10704.1"/>
    <property type="status" value="JOINED"/>
    <property type="molecule type" value="Genomic_DNA"/>
</dbReference>
<dbReference type="EMBL" id="AB072923">
    <property type="protein sequence ID" value="BAB88938.1"/>
    <property type="molecule type" value="mRNA"/>
</dbReference>
<dbReference type="EMBL" id="AB085790">
    <property type="protein sequence ID" value="BAC76828.1"/>
    <property type="molecule type" value="mRNA"/>
</dbReference>
<dbReference type="EMBL" id="AF548371">
    <property type="protein sequence ID" value="AAN40694.1"/>
    <property type="molecule type" value="mRNA"/>
</dbReference>
<dbReference type="EMBL" id="GU557064">
    <property type="protein sequence ID" value="ADD31881.1"/>
    <property type="molecule type" value="mRNA"/>
</dbReference>
<dbReference type="EMBL" id="GU557065">
    <property type="protein sequence ID" value="ADD31882.1"/>
    <property type="molecule type" value="mRNA"/>
</dbReference>
<dbReference type="EMBL" id="AY358113">
    <property type="protein sequence ID" value="AAQ88480.1"/>
    <property type="molecule type" value="mRNA"/>
</dbReference>
<dbReference type="EMBL" id="AY942196">
    <property type="protein sequence ID" value="AAX20110.1"/>
    <property type="molecule type" value="Genomic_DNA"/>
</dbReference>
<dbReference type="EMBL" id="AC005559">
    <property type="protein sequence ID" value="AAC33279.1"/>
    <property type="molecule type" value="Genomic_DNA"/>
</dbReference>
<dbReference type="EMBL" id="CH471242">
    <property type="protein sequence ID" value="EAW61181.1"/>
    <property type="molecule type" value="Genomic_DNA"/>
</dbReference>
<dbReference type="EMBL" id="CH471242">
    <property type="protein sequence ID" value="EAW61185.1"/>
    <property type="molecule type" value="Genomic_DNA"/>
</dbReference>
<dbReference type="EMBL" id="BC009040">
    <property type="protein sequence ID" value="AAH09040.1"/>
    <property type="molecule type" value="mRNA"/>
</dbReference>
<dbReference type="CCDS" id="CCDS12033.1">
    <molecule id="P35613-1"/>
</dbReference>
<dbReference type="CCDS" id="CCDS12034.1">
    <molecule id="P35613-2"/>
</dbReference>
<dbReference type="CCDS" id="CCDS58635.1">
    <molecule id="P35613-3"/>
</dbReference>
<dbReference type="PIR" id="A46506">
    <property type="entry name" value="A46506"/>
</dbReference>
<dbReference type="RefSeq" id="NP_001309172.1">
    <molecule id="P35613-2"/>
    <property type="nucleotide sequence ID" value="NM_001322243.2"/>
</dbReference>
<dbReference type="RefSeq" id="NP_001719.2">
    <molecule id="P35613-1"/>
    <property type="nucleotide sequence ID" value="NM_001728.3"/>
</dbReference>
<dbReference type="RefSeq" id="NP_940991.1">
    <molecule id="P35613-2"/>
    <property type="nucleotide sequence ID" value="NM_198589.3"/>
</dbReference>
<dbReference type="RefSeq" id="NP_940992.1">
    <molecule id="P35613-3"/>
    <property type="nucleotide sequence ID" value="NM_198590.3"/>
</dbReference>
<dbReference type="RefSeq" id="NP_940993.2">
    <molecule id="P35613-3"/>
    <property type="nucleotide sequence ID" value="NM_198591.4"/>
</dbReference>
<dbReference type="RefSeq" id="XP_016882662.1">
    <property type="nucleotide sequence ID" value="XM_017027173.1"/>
</dbReference>
<dbReference type="RefSeq" id="XP_054177819.1">
    <molecule id="P35613-1"/>
    <property type="nucleotide sequence ID" value="XM_054321844.1"/>
</dbReference>
<dbReference type="PDB" id="3B5H">
    <property type="method" value="X-ray"/>
    <property type="resolution" value="2.80 A"/>
    <property type="chains" value="A/B/C/D=140-321"/>
</dbReference>
<dbReference type="PDB" id="3I84">
    <property type="method" value="X-ray"/>
    <property type="resolution" value="2.00 A"/>
    <property type="chains" value="A/B=13-219"/>
</dbReference>
<dbReference type="PDB" id="3I85">
    <property type="method" value="X-ray"/>
    <property type="resolution" value="2.50 A"/>
    <property type="chains" value="A/B=13-219"/>
</dbReference>
<dbReference type="PDB" id="3QQN">
    <property type="method" value="X-ray"/>
    <property type="resolution" value="2.31 A"/>
    <property type="chains" value="A/B=23-138"/>
</dbReference>
<dbReference type="PDB" id="3QR2">
    <property type="method" value="X-ray"/>
    <property type="resolution" value="2.30 A"/>
    <property type="chains" value="A/B=23-138"/>
</dbReference>
<dbReference type="PDB" id="4U0Q">
    <property type="method" value="X-ray"/>
    <property type="resolution" value="3.10 A"/>
    <property type="chains" value="B/D=1-385"/>
</dbReference>
<dbReference type="PDB" id="5X0T">
    <property type="method" value="X-ray"/>
    <property type="resolution" value="2.50 A"/>
    <property type="chains" value="E/F=138-217"/>
</dbReference>
<dbReference type="PDB" id="5XF0">
    <property type="method" value="NMR"/>
    <property type="chains" value="A=215-321"/>
</dbReference>
<dbReference type="PDB" id="6LYY">
    <property type="method" value="EM"/>
    <property type="resolution" value="3.60 A"/>
    <property type="chains" value="B=140-385"/>
</dbReference>
<dbReference type="PDB" id="6LZ0">
    <property type="method" value="EM"/>
    <property type="resolution" value="3.60 A"/>
    <property type="chains" value="B=140-385"/>
</dbReference>
<dbReference type="PDB" id="7CKO">
    <property type="method" value="EM"/>
    <property type="resolution" value="2.95 A"/>
    <property type="chains" value="B=140-385"/>
</dbReference>
<dbReference type="PDB" id="7CKR">
    <property type="method" value="EM"/>
    <property type="resolution" value="3.00 A"/>
    <property type="chains" value="B=140-385"/>
</dbReference>
<dbReference type="PDB" id="7DA5">
    <property type="method" value="EM"/>
    <property type="resolution" value="3.30 A"/>
    <property type="chains" value="B=140-385"/>
</dbReference>
<dbReference type="PDB" id="7DAA">
    <property type="method" value="X-ray"/>
    <property type="resolution" value="2.51 A"/>
    <property type="chains" value="A=219-385"/>
</dbReference>
<dbReference type="PDB" id="7DCE">
    <property type="method" value="EM"/>
    <property type="resolution" value="3.80 A"/>
    <property type="chains" value="B=219-385"/>
</dbReference>
<dbReference type="PDB" id="7XY8">
    <property type="method" value="X-ray"/>
    <property type="resolution" value="2.30 A"/>
    <property type="chains" value="A/B=138-321"/>
</dbReference>
<dbReference type="PDB" id="8XEJ">
    <property type="method" value="EM"/>
    <property type="resolution" value="3.66 A"/>
    <property type="chains" value="B=219-385"/>
</dbReference>
<dbReference type="PDBsum" id="3B5H"/>
<dbReference type="PDBsum" id="3I84"/>
<dbReference type="PDBsum" id="3I85"/>
<dbReference type="PDBsum" id="3QQN"/>
<dbReference type="PDBsum" id="3QR2"/>
<dbReference type="PDBsum" id="4U0Q"/>
<dbReference type="PDBsum" id="5X0T"/>
<dbReference type="PDBsum" id="5XF0"/>
<dbReference type="PDBsum" id="6LYY"/>
<dbReference type="PDBsum" id="6LZ0"/>
<dbReference type="PDBsum" id="7CKO"/>
<dbReference type="PDBsum" id="7CKR"/>
<dbReference type="PDBsum" id="7DA5"/>
<dbReference type="PDBsum" id="7DAA"/>
<dbReference type="PDBsum" id="7DCE"/>
<dbReference type="PDBsum" id="7XY8"/>
<dbReference type="PDBsum" id="8XEJ"/>
<dbReference type="BMRB" id="P35613"/>
<dbReference type="EMDB" id="EMD-30019"/>
<dbReference type="EMDB" id="EMD-30020"/>
<dbReference type="EMDB" id="EMD-30389"/>
<dbReference type="EMDB" id="EMD-30391"/>
<dbReference type="EMDB" id="EMD-30623"/>
<dbReference type="EMDB" id="EMD-30636"/>
<dbReference type="EMDB" id="EMD-38291"/>
<dbReference type="SMR" id="P35613"/>
<dbReference type="BioGRID" id="107147">
    <property type="interactions" value="837"/>
</dbReference>
<dbReference type="CORUM" id="P35613"/>
<dbReference type="DIP" id="DIP-50310N"/>
<dbReference type="FunCoup" id="P35613">
    <property type="interactions" value="1352"/>
</dbReference>
<dbReference type="IntAct" id="P35613">
    <property type="interactions" value="254"/>
</dbReference>
<dbReference type="MINT" id="P35613"/>
<dbReference type="STRING" id="9606.ENSP00000333769"/>
<dbReference type="ChEMBL" id="CHEMBL3580492"/>
<dbReference type="TCDB" id="8.A.23.1.1">
    <property type="family name" value="the basigin (basigin) family"/>
</dbReference>
<dbReference type="GlyConnect" id="1027">
    <property type="glycosylation" value="9 N-Linked glycans (2 sites)"/>
</dbReference>
<dbReference type="GlyCosmos" id="P35613">
    <property type="glycosylation" value="4 sites, 10 glycans"/>
</dbReference>
<dbReference type="GlyGen" id="P35613">
    <property type="glycosylation" value="13 sites, 58 N-linked glycans (4 sites), 4 O-linked glycans (8 sites)"/>
</dbReference>
<dbReference type="iPTMnet" id="P35613"/>
<dbReference type="MetOSite" id="P35613"/>
<dbReference type="PhosphoSitePlus" id="P35613"/>
<dbReference type="SwissPalm" id="P35613"/>
<dbReference type="BioMuta" id="BSG"/>
<dbReference type="DMDM" id="51704273"/>
<dbReference type="CPTAC" id="CPTAC-319"/>
<dbReference type="CPTAC" id="CPTAC-320"/>
<dbReference type="jPOST" id="P35613"/>
<dbReference type="MassIVE" id="P35613"/>
<dbReference type="PaxDb" id="9606-ENSP00000333769"/>
<dbReference type="PeptideAtlas" id="P35613"/>
<dbReference type="ProteomicsDB" id="55113">
    <molecule id="P35613-1"/>
</dbReference>
<dbReference type="ProteomicsDB" id="55114">
    <molecule id="P35613-2"/>
</dbReference>
<dbReference type="ProteomicsDB" id="55115">
    <molecule id="P35613-3"/>
</dbReference>
<dbReference type="ProteomicsDB" id="55116">
    <molecule id="P35613-4"/>
</dbReference>
<dbReference type="Pumba" id="P35613"/>
<dbReference type="TopDownProteomics" id="P35613-1">
    <molecule id="P35613-1"/>
</dbReference>
<dbReference type="TopDownProteomics" id="P35613-2">
    <molecule id="P35613-2"/>
</dbReference>
<dbReference type="TopDownProteomics" id="P35613-3">
    <molecule id="P35613-3"/>
</dbReference>
<dbReference type="ABCD" id="P35613">
    <property type="antibodies" value="89 sequenced antibodies"/>
</dbReference>
<dbReference type="Antibodypedia" id="3719">
    <property type="antibodies" value="2292 antibodies from 47 providers"/>
</dbReference>
<dbReference type="DNASU" id="682"/>
<dbReference type="Ensembl" id="ENST00000333511.9">
    <molecule id="P35613-1"/>
    <property type="protein sequence ID" value="ENSP00000333769.3"/>
    <property type="gene ID" value="ENSG00000172270.22"/>
</dbReference>
<dbReference type="Ensembl" id="ENST00000346916.9">
    <molecule id="P35613-3"/>
    <property type="protein sequence ID" value="ENSP00000344707.4"/>
    <property type="gene ID" value="ENSG00000172270.22"/>
</dbReference>
<dbReference type="Ensembl" id="ENST00000353555.9">
    <molecule id="P35613-2"/>
    <property type="protein sequence ID" value="ENSP00000343809.4"/>
    <property type="gene ID" value="ENSG00000172270.22"/>
</dbReference>
<dbReference type="Ensembl" id="ENST00000545507.6">
    <molecule id="P35613-3"/>
    <property type="protein sequence ID" value="ENSP00000473664.1"/>
    <property type="gene ID" value="ENSG00000172270.22"/>
</dbReference>
<dbReference type="Ensembl" id="ENST00000573784.6">
    <molecule id="P35613-3"/>
    <property type="protein sequence ID" value="ENSP00000473393.2"/>
    <property type="gene ID" value="ENSG00000172270.22"/>
</dbReference>
<dbReference type="Ensembl" id="ENST00000576984.3">
    <molecule id="P35613-3"/>
    <property type="protein sequence ID" value="ENSP00000473528.2"/>
    <property type="gene ID" value="ENSG00000172270.22"/>
</dbReference>
<dbReference type="Ensembl" id="ENST00000680065.1">
    <molecule id="P35613-3"/>
    <property type="protein sequence ID" value="ENSP00000506020.1"/>
    <property type="gene ID" value="ENSG00000172270.22"/>
</dbReference>
<dbReference type="GeneID" id="682"/>
<dbReference type="KEGG" id="hsa:682"/>
<dbReference type="MANE-Select" id="ENST00000333511.9">
    <property type="protein sequence ID" value="ENSP00000333769.3"/>
    <property type="RefSeq nucleotide sequence ID" value="NM_001728.4"/>
    <property type="RefSeq protein sequence ID" value="NP_001719.2"/>
</dbReference>
<dbReference type="UCSC" id="uc002loy.5">
    <molecule id="P35613-1"/>
    <property type="organism name" value="human"/>
</dbReference>
<dbReference type="AGR" id="HGNC:1116"/>
<dbReference type="CTD" id="682"/>
<dbReference type="DisGeNET" id="682"/>
<dbReference type="GeneCards" id="BSG"/>
<dbReference type="HGNC" id="HGNC:1116">
    <property type="gene designation" value="BSG"/>
</dbReference>
<dbReference type="HPA" id="ENSG00000172270">
    <property type="expression patterns" value="Low tissue specificity"/>
</dbReference>
<dbReference type="MIM" id="109480">
    <property type="type" value="gene"/>
</dbReference>
<dbReference type="MIM" id="111380">
    <property type="type" value="phenotype"/>
</dbReference>
<dbReference type="neXtProt" id="NX_P35613"/>
<dbReference type="OpenTargets" id="ENSG00000172270"/>
<dbReference type="PharmGKB" id="PA25433"/>
<dbReference type="VEuPathDB" id="HostDB:ENSG00000172270"/>
<dbReference type="eggNOG" id="ENOG502QPKN">
    <property type="taxonomic scope" value="Eukaryota"/>
</dbReference>
<dbReference type="GeneTree" id="ENSGT00940000159142"/>
<dbReference type="HOGENOM" id="CLU_058449_0_0_1"/>
<dbReference type="InParanoid" id="P35613"/>
<dbReference type="OMA" id="TITGHKW"/>
<dbReference type="OrthoDB" id="5970915at2759"/>
<dbReference type="PAN-GO" id="P35613">
    <property type="GO annotations" value="6 GO annotations based on evolutionary models"/>
</dbReference>
<dbReference type="PhylomeDB" id="P35613"/>
<dbReference type="TreeFam" id="TF326759"/>
<dbReference type="PathwayCommons" id="P35613"/>
<dbReference type="Reactome" id="R-HSA-1474228">
    <property type="pathway name" value="Degradation of the extracellular matrix"/>
</dbReference>
<dbReference type="Reactome" id="R-HSA-210991">
    <property type="pathway name" value="Basigin interactions"/>
</dbReference>
<dbReference type="Reactome" id="R-HSA-216083">
    <property type="pathway name" value="Integrin cell surface interactions"/>
</dbReference>
<dbReference type="Reactome" id="R-HSA-433692">
    <property type="pathway name" value="Proton-coupled monocarboxylate transport"/>
</dbReference>
<dbReference type="Reactome" id="R-HSA-5619070">
    <property type="pathway name" value="Defective SLC16A1 causes symptomatic deficiency in lactate transport (SDLT)"/>
</dbReference>
<dbReference type="Reactome" id="R-HSA-9749641">
    <property type="pathway name" value="Aspirin ADME"/>
</dbReference>
<dbReference type="SignaLink" id="P35613"/>
<dbReference type="SIGNOR" id="P35613"/>
<dbReference type="BioGRID-ORCS" id="682">
    <property type="hits" value="68 hits in 1156 CRISPR screens"/>
</dbReference>
<dbReference type="CD-CODE" id="FB4E32DD">
    <property type="entry name" value="Presynaptic clusters and postsynaptic densities"/>
</dbReference>
<dbReference type="ChiTaRS" id="BSG">
    <property type="organism name" value="human"/>
</dbReference>
<dbReference type="EvolutionaryTrace" id="P35613"/>
<dbReference type="GeneWiki" id="Basigin"/>
<dbReference type="GenomeRNAi" id="682"/>
<dbReference type="Pharos" id="P35613">
    <property type="development level" value="Tbio"/>
</dbReference>
<dbReference type="PRO" id="PR:P35613"/>
<dbReference type="Proteomes" id="UP000005640">
    <property type="component" value="Chromosome 19"/>
</dbReference>
<dbReference type="RNAct" id="P35613">
    <property type="molecule type" value="protein"/>
</dbReference>
<dbReference type="Bgee" id="ENSG00000172270">
    <property type="expression patterns" value="Expressed in apex of heart and 193 other cell types or tissues"/>
</dbReference>
<dbReference type="ExpressionAtlas" id="P35613">
    <property type="expression patterns" value="baseline and differential"/>
</dbReference>
<dbReference type="GO" id="GO:0002080">
    <property type="term" value="C:acrosomal membrane"/>
    <property type="evidence" value="ECO:0007669"/>
    <property type="project" value="Ensembl"/>
</dbReference>
<dbReference type="GO" id="GO:0030424">
    <property type="term" value="C:axon"/>
    <property type="evidence" value="ECO:0000318"/>
    <property type="project" value="GO_Central"/>
</dbReference>
<dbReference type="GO" id="GO:0016323">
    <property type="term" value="C:basolateral plasma membrane"/>
    <property type="evidence" value="ECO:0007669"/>
    <property type="project" value="UniProtKB-SubCell"/>
</dbReference>
<dbReference type="GO" id="GO:0005789">
    <property type="term" value="C:endoplasmic reticulum membrane"/>
    <property type="evidence" value="ECO:0000314"/>
    <property type="project" value="UniProtKB"/>
</dbReference>
<dbReference type="GO" id="GO:0005768">
    <property type="term" value="C:endosome"/>
    <property type="evidence" value="ECO:0000314"/>
    <property type="project" value="UniProtKB"/>
</dbReference>
<dbReference type="GO" id="GO:0070062">
    <property type="term" value="C:extracellular exosome"/>
    <property type="evidence" value="ECO:0007005"/>
    <property type="project" value="UniProtKB"/>
</dbReference>
<dbReference type="GO" id="GO:0005925">
    <property type="term" value="C:focal adhesion"/>
    <property type="evidence" value="ECO:0007005"/>
    <property type="project" value="UniProtKB"/>
</dbReference>
<dbReference type="GO" id="GO:0000139">
    <property type="term" value="C:Golgi membrane"/>
    <property type="evidence" value="ECO:0000304"/>
    <property type="project" value="Reactome"/>
</dbReference>
<dbReference type="GO" id="GO:0042470">
    <property type="term" value="C:melanosome"/>
    <property type="evidence" value="ECO:0007669"/>
    <property type="project" value="UniProtKB-SubCell"/>
</dbReference>
<dbReference type="GO" id="GO:0016020">
    <property type="term" value="C:membrane"/>
    <property type="evidence" value="ECO:0007005"/>
    <property type="project" value="UniProtKB"/>
</dbReference>
<dbReference type="GO" id="GO:0005739">
    <property type="term" value="C:mitochondrion"/>
    <property type="evidence" value="ECO:0007005"/>
    <property type="project" value="UniProtKB"/>
</dbReference>
<dbReference type="GO" id="GO:0001917">
    <property type="term" value="C:photoreceptor inner segment"/>
    <property type="evidence" value="ECO:0000250"/>
    <property type="project" value="UniProtKB"/>
</dbReference>
<dbReference type="GO" id="GO:0001750">
    <property type="term" value="C:photoreceptor outer segment"/>
    <property type="evidence" value="ECO:0000250"/>
    <property type="project" value="UniProtKB"/>
</dbReference>
<dbReference type="GO" id="GO:0005886">
    <property type="term" value="C:plasma membrane"/>
    <property type="evidence" value="ECO:0000314"/>
    <property type="project" value="UniProtKB"/>
</dbReference>
<dbReference type="GO" id="GO:0042383">
    <property type="term" value="C:sarcolemma"/>
    <property type="evidence" value="ECO:0007669"/>
    <property type="project" value="Ensembl"/>
</dbReference>
<dbReference type="GO" id="GO:0045296">
    <property type="term" value="F:cadherin binding"/>
    <property type="evidence" value="ECO:0007005"/>
    <property type="project" value="BHF-UCL"/>
</dbReference>
<dbReference type="GO" id="GO:0098632">
    <property type="term" value="F:cell-cell adhesion mediator activity"/>
    <property type="evidence" value="ECO:0000318"/>
    <property type="project" value="GO_Central"/>
</dbReference>
<dbReference type="GO" id="GO:0005537">
    <property type="term" value="F:D-mannose binding"/>
    <property type="evidence" value="ECO:0007669"/>
    <property type="project" value="UniProtKB-KW"/>
</dbReference>
<dbReference type="GO" id="GO:0038023">
    <property type="term" value="F:signaling receptor activity"/>
    <property type="evidence" value="ECO:0000314"/>
    <property type="project" value="UniProtKB"/>
</dbReference>
<dbReference type="GO" id="GO:0001618">
    <property type="term" value="F:virus receptor activity"/>
    <property type="evidence" value="ECO:0000315"/>
    <property type="project" value="UniProtKB"/>
</dbReference>
<dbReference type="GO" id="GO:0001525">
    <property type="term" value="P:angiogenesis"/>
    <property type="evidence" value="ECO:0007669"/>
    <property type="project" value="UniProtKB-KW"/>
</dbReference>
<dbReference type="GO" id="GO:0007411">
    <property type="term" value="P:axon guidance"/>
    <property type="evidence" value="ECO:0000318"/>
    <property type="project" value="GO_Central"/>
</dbReference>
<dbReference type="GO" id="GO:0007166">
    <property type="term" value="P:cell surface receptor signaling pathway"/>
    <property type="evidence" value="ECO:0000304"/>
    <property type="project" value="ProtInc"/>
</dbReference>
<dbReference type="GO" id="GO:0046697">
    <property type="term" value="P:decidualization"/>
    <property type="evidence" value="ECO:0007669"/>
    <property type="project" value="Ensembl"/>
</dbReference>
<dbReference type="GO" id="GO:0070593">
    <property type="term" value="P:dendrite self-avoidance"/>
    <property type="evidence" value="ECO:0000318"/>
    <property type="project" value="GO_Central"/>
</dbReference>
<dbReference type="GO" id="GO:0007566">
    <property type="term" value="P:embryo implantation"/>
    <property type="evidence" value="ECO:0007669"/>
    <property type="project" value="Ensembl"/>
</dbReference>
<dbReference type="GO" id="GO:0061154">
    <property type="term" value="P:endothelial tube morphogenesis"/>
    <property type="evidence" value="ECO:0000314"/>
    <property type="project" value="UniProtKB"/>
</dbReference>
<dbReference type="GO" id="GO:0007156">
    <property type="term" value="P:homophilic cell adhesion via plasma membrane adhesion molecules"/>
    <property type="evidence" value="ECO:0000318"/>
    <property type="project" value="GO_Central"/>
</dbReference>
<dbReference type="GO" id="GO:0003407">
    <property type="term" value="P:neural retina development"/>
    <property type="evidence" value="ECO:0000250"/>
    <property type="project" value="UniProtKB"/>
</dbReference>
<dbReference type="GO" id="GO:0030593">
    <property type="term" value="P:neutrophil chemotaxis"/>
    <property type="evidence" value="ECO:0000315"/>
    <property type="project" value="UniProtKB"/>
</dbReference>
<dbReference type="GO" id="GO:0042475">
    <property type="term" value="P:odontogenesis of dentin-containing tooth"/>
    <property type="evidence" value="ECO:0007669"/>
    <property type="project" value="Ensembl"/>
</dbReference>
<dbReference type="GO" id="GO:0045494">
    <property type="term" value="P:photoreceptor cell maintenance"/>
    <property type="evidence" value="ECO:0000314"/>
    <property type="project" value="UniProtKB"/>
</dbReference>
<dbReference type="GO" id="GO:0010595">
    <property type="term" value="P:positive regulation of endothelial cell migration"/>
    <property type="evidence" value="ECO:0000314"/>
    <property type="project" value="UniProtKB"/>
</dbReference>
<dbReference type="GO" id="GO:0032755">
    <property type="term" value="P:positive regulation of interleukin-6 production"/>
    <property type="evidence" value="ECO:0000314"/>
    <property type="project" value="UniProtKB"/>
</dbReference>
<dbReference type="GO" id="GO:1904466">
    <property type="term" value="P:positive regulation of matrix metallopeptidase secretion"/>
    <property type="evidence" value="ECO:0000314"/>
    <property type="project" value="UniProtKB"/>
</dbReference>
<dbReference type="GO" id="GO:0010575">
    <property type="term" value="P:positive regulation of vascular endothelial growth factor production"/>
    <property type="evidence" value="ECO:0000314"/>
    <property type="project" value="UniProtKB"/>
</dbReference>
<dbReference type="GO" id="GO:0046598">
    <property type="term" value="P:positive regulation of viral entry into host cell"/>
    <property type="evidence" value="ECO:0000314"/>
    <property type="project" value="UniProtKB"/>
</dbReference>
<dbReference type="GO" id="GO:0072659">
    <property type="term" value="P:protein localization to plasma membrane"/>
    <property type="evidence" value="ECO:0000315"/>
    <property type="project" value="ARUK-UCL"/>
</dbReference>
<dbReference type="GO" id="GO:0051591">
    <property type="term" value="P:response to cAMP"/>
    <property type="evidence" value="ECO:0007669"/>
    <property type="project" value="Ensembl"/>
</dbReference>
<dbReference type="GO" id="GO:0046689">
    <property type="term" value="P:response to mercury ion"/>
    <property type="evidence" value="ECO:0007669"/>
    <property type="project" value="Ensembl"/>
</dbReference>
<dbReference type="GO" id="GO:0043434">
    <property type="term" value="P:response to peptide hormone"/>
    <property type="evidence" value="ECO:0007669"/>
    <property type="project" value="Ensembl"/>
</dbReference>
<dbReference type="CDD" id="cd20940">
    <property type="entry name" value="Ig0_BSG1"/>
    <property type="match status" value="1"/>
</dbReference>
<dbReference type="FunFam" id="2.60.40.10:FF:001329">
    <property type="entry name" value="Basigin"/>
    <property type="match status" value="1"/>
</dbReference>
<dbReference type="FunFam" id="2.60.40.10:FF:000291">
    <property type="entry name" value="Neuroplastin b"/>
    <property type="match status" value="1"/>
</dbReference>
<dbReference type="FunFam" id="2.60.40.10:FF:000387">
    <property type="entry name" value="Neuroplastin b"/>
    <property type="match status" value="1"/>
</dbReference>
<dbReference type="Gene3D" id="2.60.40.10">
    <property type="entry name" value="Immunoglobulins"/>
    <property type="match status" value="3"/>
</dbReference>
<dbReference type="InterPro" id="IPR007110">
    <property type="entry name" value="Ig-like_dom"/>
</dbReference>
<dbReference type="InterPro" id="IPR036179">
    <property type="entry name" value="Ig-like_dom_sf"/>
</dbReference>
<dbReference type="InterPro" id="IPR013783">
    <property type="entry name" value="Ig-like_fold"/>
</dbReference>
<dbReference type="InterPro" id="IPR003599">
    <property type="entry name" value="Ig_sub"/>
</dbReference>
<dbReference type="InterPro" id="IPR003598">
    <property type="entry name" value="Ig_sub2"/>
</dbReference>
<dbReference type="PANTHER" id="PTHR10075:SF107">
    <property type="entry name" value="BASIGIN"/>
    <property type="match status" value="1"/>
</dbReference>
<dbReference type="PANTHER" id="PTHR10075">
    <property type="entry name" value="BASIGIN RELATED"/>
    <property type="match status" value="1"/>
</dbReference>
<dbReference type="Pfam" id="PF13927">
    <property type="entry name" value="Ig_3"/>
    <property type="match status" value="2"/>
</dbReference>
<dbReference type="SMART" id="SM00409">
    <property type="entry name" value="IG"/>
    <property type="match status" value="2"/>
</dbReference>
<dbReference type="SMART" id="SM00408">
    <property type="entry name" value="IGc2"/>
    <property type="match status" value="2"/>
</dbReference>
<dbReference type="SUPFAM" id="SSF48726">
    <property type="entry name" value="Immunoglobulin"/>
    <property type="match status" value="3"/>
</dbReference>
<dbReference type="PROSITE" id="PS50835">
    <property type="entry name" value="IG_LIKE"/>
    <property type="match status" value="3"/>
</dbReference>